<organism>
    <name type="scientific">Homo sapiens</name>
    <name type="common">Human</name>
    <dbReference type="NCBI Taxonomy" id="9606"/>
    <lineage>
        <taxon>Eukaryota</taxon>
        <taxon>Metazoa</taxon>
        <taxon>Chordata</taxon>
        <taxon>Craniata</taxon>
        <taxon>Vertebrata</taxon>
        <taxon>Euteleostomi</taxon>
        <taxon>Mammalia</taxon>
        <taxon>Eutheria</taxon>
        <taxon>Euarchontoglires</taxon>
        <taxon>Primates</taxon>
        <taxon>Haplorrhini</taxon>
        <taxon>Catarrhini</taxon>
        <taxon>Hominidae</taxon>
        <taxon>Homo</taxon>
    </lineage>
</organism>
<reference key="1">
    <citation type="journal article" date="2004" name="Differentiation">
        <title>The human type I keratin gene family: characterization of new hair follicle specific members and evaluation of the chromosome 17q21.2 gene domain.</title>
        <authorList>
            <person name="Rogers M.A."/>
            <person name="Winter H."/>
            <person name="Langbein L."/>
            <person name="Bleiler R."/>
            <person name="Schweizer J."/>
        </authorList>
    </citation>
    <scope>NUCLEOTIDE SEQUENCE [MRNA]</scope>
    <scope>TISSUE SPECIFICITY</scope>
    <scope>VARIANTS SER-85 AND TYR-265</scope>
    <source>
        <tissue>Scalp</tissue>
    </source>
</reference>
<reference key="2">
    <citation type="journal article" date="2004" name="Genome Res.">
        <title>The status, quality, and expansion of the NIH full-length cDNA project: the Mammalian Gene Collection (MGC).</title>
        <authorList>
            <consortium name="The MGC Project Team"/>
        </authorList>
    </citation>
    <scope>NUCLEOTIDE SEQUENCE [LARGE SCALE MRNA]</scope>
</reference>
<reference key="3">
    <citation type="journal article" date="2004" name="Eur. J. Cell Biol.">
        <title>Comprehensive analysis of keratin gene clusters in humans and rodents.</title>
        <authorList>
            <person name="Hesse M."/>
            <person name="Zimek A."/>
            <person name="Weber K."/>
            <person name="Magin T.M."/>
        </authorList>
    </citation>
    <scope>IDENTIFICATION</scope>
</reference>
<reference key="4">
    <citation type="journal article" date="2007" name="J. Invest. Dermatol.">
        <title>Novel type I hair keratins K39 and K40 are the last to be expressed in differentiation of the hair: completion of the human hair keratin catalog.</title>
        <authorList>
            <person name="Langbein L."/>
            <person name="Rogers M.A."/>
            <person name="Praetzel-Wunder S."/>
            <person name="Boeckler D."/>
            <person name="Schirmacher P."/>
            <person name="Schweizer J."/>
        </authorList>
    </citation>
    <scope>POSSIBLE FUNCTION</scope>
    <scope>TISSUE SPECIFICITY</scope>
    <scope>DEVELOPMENTAL STAGE</scope>
</reference>
<evidence type="ECO:0000255" key="1">
    <source>
        <dbReference type="PROSITE-ProRule" id="PRU01188"/>
    </source>
</evidence>
<evidence type="ECO:0000269" key="2">
    <source>
    </source>
</evidence>
<evidence type="ECO:0000269" key="3">
    <source>
    </source>
</evidence>
<evidence type="ECO:0000305" key="4"/>
<accession>Q6A162</accession>
<accession>Q6IFU5</accession>
<sequence>MTSDCSSTHCSPESCGTASGCAPASSCSVETACLPGTCATSRCQTPSFLSRSRGLTGCLLPCYFTGSCNSPCLVGNCAWCEDGVFTSNEKETMQFLNDRLASYLEKVRSLEETNAELESRIQEQCEQDIPMVCPDYQRYFNTIEDLQQKILCTKAENSRLAVQLDNCKLATDDFKSKYESELSLRQLLEADISSLHGILEELTLCKSDLEAHVESLKEDLLCLKKNHEEEVNLLREQLGDRLSVELDTAPTLDLNRVLDEMRCQCETVLANNRREAEEWLAVQTEELNQQQLSSAEQLQGCQMEILELKRTASALEIELQAQQSLTESLECTVAETEAQYSSQLAQIQCLIDNLENQLAEIRCDLERQNQEYQVLLDVKARLEGEINTYWGLLDSEDSRLSCSPCSTTCTSSNTCEPCSAYVICTVENCCL</sequence>
<feature type="chain" id="PRO_0000314857" description="Keratin, type I cytoskeletal 40">
    <location>
        <begin position="1"/>
        <end position="431"/>
    </location>
</feature>
<feature type="domain" description="IF rod" evidence="1">
    <location>
        <begin position="89"/>
        <end position="400"/>
    </location>
</feature>
<feature type="region of interest" description="Head">
    <location>
        <begin position="1"/>
        <end position="89"/>
    </location>
</feature>
<feature type="region of interest" description="Coil 1A">
    <location>
        <begin position="90"/>
        <end position="124"/>
    </location>
</feature>
<feature type="region of interest" description="Linker 1">
    <location>
        <begin position="125"/>
        <end position="135"/>
    </location>
</feature>
<feature type="region of interest" description="Coil 1B">
    <location>
        <begin position="136"/>
        <end position="236"/>
    </location>
</feature>
<feature type="region of interest" description="Linker 12">
    <location>
        <begin position="237"/>
        <end position="252"/>
    </location>
</feature>
<feature type="region of interest" description="Coil 2">
    <location>
        <begin position="253"/>
        <end position="396"/>
    </location>
</feature>
<feature type="region of interest" description="Tail">
    <location>
        <begin position="397"/>
        <end position="431"/>
    </location>
</feature>
<feature type="site" description="Stutter">
    <location>
        <position position="338"/>
    </location>
</feature>
<feature type="sequence variant" id="VAR_038078" description="In dbSNP:rs1510069.">
    <original>T</original>
    <variation>A</variation>
    <location>
        <position position="37"/>
    </location>
</feature>
<feature type="sequence variant" id="VAR_038079" description="In dbSNP:rs17843015." evidence="2">
    <original>F</original>
    <variation>S</variation>
    <location>
        <position position="85"/>
    </location>
</feature>
<feature type="sequence variant" id="VAR_038080" description="In dbSNP:rs1510068.">
    <original>S</original>
    <variation>N</variation>
    <location>
        <position position="102"/>
    </location>
</feature>
<feature type="sequence variant" id="VAR_038081" description="In dbSNP:rs9908304.">
    <original>T</original>
    <variation>M</variation>
    <location>
        <position position="153"/>
    </location>
</feature>
<feature type="sequence variant" id="VAR_049787" description="In dbSNP:rs2010027.">
    <original>R</original>
    <variation>H</variation>
    <location>
        <position position="235"/>
    </location>
</feature>
<feature type="sequence variant" id="VAR_049788" description="In dbSNP:rs721957." evidence="2">
    <original>C</original>
    <variation>Y</variation>
    <location>
        <position position="265"/>
    </location>
</feature>
<feature type="sequence variant" id="VAR_049789" description="In dbSNP:rs721958.">
    <original>E</original>
    <variation>D</variation>
    <location>
        <position position="286"/>
    </location>
</feature>
<feature type="sequence variant" id="VAR_049790" description="In dbSNP:rs9908389.">
    <original>M</original>
    <variation>T</variation>
    <location>
        <position position="303"/>
    </location>
</feature>
<feature type="sequence variant" id="VAR_049791" description="In dbSNP:rs16968862.">
    <original>S</original>
    <variation>L</variation>
    <location>
        <position position="406"/>
    </location>
</feature>
<feature type="sequence conflict" description="In Ref. 1; CAH10353." evidence="4" ref="1">
    <original>R</original>
    <variation>C</variation>
    <location>
        <position position="241"/>
    </location>
</feature>
<feature type="sequence conflict" description="In Ref. 1; CAH10353." evidence="4" ref="1">
    <original>C</original>
    <variation>R</variation>
    <location>
        <position position="349"/>
    </location>
</feature>
<feature type="sequence conflict" description="In Ref. 1; CAH10353." evidence="4" ref="1">
    <original>T</original>
    <variation>I</variation>
    <location>
        <position position="408"/>
    </location>
</feature>
<keyword id="KW-0175">Coiled coil</keyword>
<keyword id="KW-0403">Intermediate filament</keyword>
<keyword id="KW-0416">Keratin</keyword>
<keyword id="KW-1267">Proteomics identification</keyword>
<keyword id="KW-1185">Reference proteome</keyword>
<protein>
    <recommendedName>
        <fullName>Keratin, type I cytoskeletal 40</fullName>
    </recommendedName>
    <alternativeName>
        <fullName>Cytokeratin-40</fullName>
        <shortName>CK-40</shortName>
    </alternativeName>
    <alternativeName>
        <fullName>Keratin-40</fullName>
        <shortName>K40</shortName>
    </alternativeName>
    <alternativeName>
        <fullName>Type I hair keratin Ka36</fullName>
    </alternativeName>
</protein>
<proteinExistence type="evidence at protein level"/>
<name>K1C40_HUMAN</name>
<comment type="function">
    <text>May play a role in late hair differentiation.</text>
</comment>
<comment type="subunit">
    <text>Heterotetramer of two type I and two type II keratins.</text>
</comment>
<comment type="interaction">
    <interactant intactId="EBI-10171697">
        <id>Q6A162</id>
    </interactant>
    <interactant intactId="EBI-10714818">
        <id>Q4G176</id>
        <label>ACSF3</label>
    </interactant>
    <organismsDiffer>false</organismsDiffer>
    <experiments>3</experiments>
</comment>
<comment type="interaction">
    <interactant intactId="EBI-10171697">
        <id>Q6A162</id>
    </interactant>
    <interactant intactId="EBI-2511802">
        <id>Q9UHI8</id>
        <label>ADAMTS1</label>
    </interactant>
    <organismsDiffer>false</organismsDiffer>
    <experiments>3</experiments>
</comment>
<comment type="interaction">
    <interactant intactId="EBI-10171697">
        <id>Q6A162</id>
    </interactant>
    <interactant intactId="EBI-10221726">
        <id>P82987</id>
        <label>ADAMTSL3</label>
    </interactant>
    <organismsDiffer>false</organismsDiffer>
    <experiments>3</experiments>
</comment>
<comment type="interaction">
    <interactant intactId="EBI-10171697">
        <id>Q6A162</id>
    </interactant>
    <interactant intactId="EBI-8637627">
        <id>Q8WTP8</id>
        <label>AEN</label>
    </interactant>
    <organismsDiffer>false</organismsDiffer>
    <experiments>3</experiments>
</comment>
<comment type="interaction">
    <interactant intactId="EBI-10171697">
        <id>Q6A162</id>
    </interactant>
    <interactant intactId="EBI-727098">
        <id>P21549</id>
        <label>AGXT</label>
    </interactant>
    <organismsDiffer>false</organismsDiffer>
    <experiments>3</experiments>
</comment>
<comment type="interaction">
    <interactant intactId="EBI-10171697">
        <id>Q6A162</id>
    </interactant>
    <interactant intactId="EBI-8643161">
        <id>Q9NX04</id>
        <label>AIRIM</label>
    </interactant>
    <organismsDiffer>false</organismsDiffer>
    <experiments>3</experiments>
</comment>
<comment type="interaction">
    <interactant intactId="EBI-10171697">
        <id>Q6A162</id>
    </interactant>
    <interactant intactId="EBI-10222656">
        <id>Q02040-3</id>
        <label>AKAP17A</label>
    </interactant>
    <organismsDiffer>false</organismsDiffer>
    <experiments>3</experiments>
</comment>
<comment type="interaction">
    <interactant intactId="EBI-10171697">
        <id>Q6A162</id>
    </interactant>
    <interactant intactId="EBI-2558314">
        <id>P43353</id>
        <label>ALDH3B1</label>
    </interactant>
    <organismsDiffer>false</organismsDiffer>
    <experiments>3</experiments>
</comment>
<comment type="interaction">
    <interactant intactId="EBI-10171697">
        <id>Q6A162</id>
    </interactant>
    <interactant intactId="EBI-744859">
        <id>Q96IX9</id>
        <label>ANKRD36BP1</label>
    </interactant>
    <organismsDiffer>false</organismsDiffer>
    <experiments>3</experiments>
</comment>
<comment type="interaction">
    <interactant intactId="EBI-10171697">
        <id>Q6A162</id>
    </interactant>
    <interactant intactId="EBI-541426">
        <id>Q9BXS5</id>
        <label>AP1M1</label>
    </interactant>
    <organismsDiffer>false</organismsDiffer>
    <experiments>6</experiments>
</comment>
<comment type="interaction">
    <interactant intactId="EBI-10171697">
        <id>Q6A162</id>
    </interactant>
    <interactant intactId="EBI-745213">
        <id>P29972</id>
        <label>AQP1</label>
    </interactant>
    <organismsDiffer>false</organismsDiffer>
    <experiments>3</experiments>
</comment>
<comment type="interaction">
    <interactant intactId="EBI-10171697">
        <id>Q6A162</id>
    </interactant>
    <interactant intactId="EBI-746103">
        <id>P55064</id>
        <label>AQP5</label>
    </interactant>
    <organismsDiffer>false</organismsDiffer>
    <experiments>3</experiments>
</comment>
<comment type="interaction">
    <interactant intactId="EBI-10171697">
        <id>Q6A162</id>
    </interactant>
    <interactant intactId="EBI-742909">
        <id>Q9H6L4</id>
        <label>ARMC7</label>
    </interactant>
    <organismsDiffer>false</organismsDiffer>
    <experiments>6</experiments>
</comment>
<comment type="interaction">
    <interactant intactId="EBI-10171697">
        <id>Q6A162</id>
    </interactant>
    <interactant intactId="EBI-10243706">
        <id>Q5FYB1</id>
        <label>ARSI</label>
    </interactant>
    <organismsDiffer>false</organismsDiffer>
    <experiments>3</experiments>
</comment>
<comment type="interaction">
    <interactant intactId="EBI-10171697">
        <id>Q6A162</id>
    </interactant>
    <interactant intactId="EBI-743231">
        <id>O95671</id>
        <label>ASMTL</label>
    </interactant>
    <organismsDiffer>false</organismsDiffer>
    <experiments>3</experiments>
</comment>
<comment type="interaction">
    <interactant intactId="EBI-10171697">
        <id>Q6A162</id>
    </interactant>
    <interactant intactId="EBI-2866142">
        <id>Q32MH5</id>
        <label>ATOSA</label>
    </interactant>
    <organismsDiffer>false</organismsDiffer>
    <experiments>3</experiments>
</comment>
<comment type="interaction">
    <interactant intactId="EBI-10171697">
        <id>Q6A162</id>
    </interactant>
    <interactant intactId="EBI-1166928">
        <id>Q8N5M1</id>
        <label>ATPAF2</label>
    </interactant>
    <organismsDiffer>false</organismsDiffer>
    <experiments>7</experiments>
</comment>
<comment type="interaction">
    <interactant intactId="EBI-10171697">
        <id>Q6A162</id>
    </interactant>
    <interactant intactId="EBI-8640233">
        <id>Q5T686</id>
        <label>AVPI1</label>
    </interactant>
    <organismsDiffer>false</organismsDiffer>
    <experiments>3</experiments>
</comment>
<comment type="interaction">
    <interactant intactId="EBI-10171697">
        <id>Q6A162</id>
    </interactant>
    <interactant intactId="EBI-710484">
        <id>O15169</id>
        <label>AXIN1</label>
    </interactant>
    <organismsDiffer>false</organismsDiffer>
    <experiments>3</experiments>
</comment>
<comment type="interaction">
    <interactant intactId="EBI-10171697">
        <id>Q6A162</id>
    </interactant>
    <interactant intactId="EBI-742750">
        <id>Q8TBE0</id>
        <label>BAHD1</label>
    </interactant>
    <organismsDiffer>false</organismsDiffer>
    <experiments>3</experiments>
</comment>
<comment type="interaction">
    <interactant intactId="EBI-10171697">
        <id>Q6A162</id>
    </interactant>
    <interactant intactId="EBI-473181">
        <id>Q99728</id>
        <label>BARD1</label>
    </interactant>
    <organismsDiffer>false</organismsDiffer>
    <experiments>3</experiments>
</comment>
<comment type="interaction">
    <interactant intactId="EBI-10171697">
        <id>Q6A162</id>
    </interactant>
    <interactant intactId="EBI-1050106">
        <id>O75934</id>
        <label>BCAS2</label>
    </interactant>
    <organismsDiffer>false</organismsDiffer>
    <experiments>4</experiments>
</comment>
<comment type="interaction">
    <interactant intactId="EBI-10171697">
        <id>Q6A162</id>
    </interactant>
    <interactant intactId="EBI-745073">
        <id>Q9BXY8</id>
        <label>BEX2</label>
    </interactant>
    <organismsDiffer>false</organismsDiffer>
    <experiments>3</experiments>
</comment>
<comment type="interaction">
    <interactant intactId="EBI-10171697">
        <id>Q6A162</id>
    </interactant>
    <interactant intactId="EBI-741210">
        <id>Q0VDD7</id>
        <label>BRME1</label>
    </interactant>
    <organismsDiffer>false</organismsDiffer>
    <experiments>3</experiments>
</comment>
<comment type="interaction">
    <interactant intactId="EBI-10171697">
        <id>Q6A162</id>
    </interactant>
    <interactant intactId="EBI-358049">
        <id>Q13895</id>
        <label>BYSL</label>
    </interactant>
    <organismsDiffer>false</organismsDiffer>
    <experiments>8</experiments>
</comment>
<comment type="interaction">
    <interactant intactId="EBI-10171697">
        <id>Q6A162</id>
    </interactant>
    <interactant intactId="EBI-744052">
        <id>Q5T681</id>
        <label>C10orf62</label>
    </interactant>
    <organismsDiffer>false</organismsDiffer>
    <experiments>3</experiments>
</comment>
<comment type="interaction">
    <interactant intactId="EBI-10171697">
        <id>Q6A162</id>
    </interactant>
    <interactant intactId="EBI-6660291">
        <id>Q6NUJ2</id>
        <label>C11orf87</label>
    </interactant>
    <organismsDiffer>false</organismsDiffer>
    <experiments>3</experiments>
</comment>
<comment type="interaction">
    <interactant intactId="EBI-10171697">
        <id>Q6A162</id>
    </interactant>
    <interactant intactId="EBI-743338">
        <id>B2RAB7</id>
        <label>C18orf45</label>
    </interactant>
    <organismsDiffer>false</organismsDiffer>
    <experiments>3</experiments>
</comment>
<comment type="interaction">
    <interactant intactId="EBI-10171697">
        <id>Q6A162</id>
    </interactant>
    <interactant intactId="EBI-2859285">
        <id>Q9NVV2</id>
        <label>C19orf73</label>
    </interactant>
    <organismsDiffer>false</organismsDiffer>
    <experiments>3</experiments>
</comment>
<comment type="interaction">
    <interactant intactId="EBI-10171697">
        <id>Q6A162</id>
    </interactant>
    <interactant intactId="EBI-747505">
        <id>Q8TAB5</id>
        <label>C1orf216</label>
    </interactant>
    <organismsDiffer>false</organismsDiffer>
    <experiments>3</experiments>
</comment>
<comment type="interaction">
    <interactant intactId="EBI-10171697">
        <id>Q6A162</id>
    </interactant>
    <interactant intactId="EBI-739879">
        <id>Q53TS8</id>
        <label>C2CD6</label>
    </interactant>
    <organismsDiffer>false</organismsDiffer>
    <experiments>3</experiments>
</comment>
<comment type="interaction">
    <interactant intactId="EBI-10171697">
        <id>Q6A162</id>
    </interactant>
    <interactant intactId="EBI-11603468">
        <id>Q2NKX9</id>
        <label>C2orf68</label>
    </interactant>
    <organismsDiffer>false</organismsDiffer>
    <experiments>3</experiments>
</comment>
<comment type="interaction">
    <interactant intactId="EBI-10171697">
        <id>Q6A162</id>
    </interactant>
    <interactant intactId="EBI-10173955">
        <id>A6NFR6-4</id>
        <label>C5orf60</label>
    </interactant>
    <organismsDiffer>false</organismsDiffer>
    <experiments>3</experiments>
</comment>
<comment type="interaction">
    <interactant intactId="EBI-10171697">
        <id>Q6A162</id>
    </interactant>
    <interactant intactId="EBI-10244057">
        <id>Q5I0X4</id>
        <label>C6orf226</label>
    </interactant>
    <organismsDiffer>false</organismsDiffer>
    <experiments>3</experiments>
</comment>
<comment type="interaction">
    <interactant intactId="EBI-10171697">
        <id>Q6A162</id>
    </interactant>
    <interactant intactId="EBI-751596">
        <id>Q96LL4</id>
        <label>C8orf48</label>
    </interactant>
    <organismsDiffer>false</organismsDiffer>
    <experiments>3</experiments>
</comment>
<comment type="interaction">
    <interactant intactId="EBI-10171697">
        <id>Q6A162</id>
    </interactant>
    <interactant intactId="EBI-10265475">
        <id>Q8N4G4</id>
        <label>CA6</label>
    </interactant>
    <organismsDiffer>false</organismsDiffer>
    <experiments>3</experiments>
</comment>
<comment type="interaction">
    <interactant intactId="EBI-10171697">
        <id>Q6A162</id>
    </interactant>
    <interactant intactId="EBI-751319">
        <id>Q9H257</id>
        <label>CARD9</label>
    </interactant>
    <organismsDiffer>false</organismsDiffer>
    <experiments>3</experiments>
</comment>
<comment type="interaction">
    <interactant intactId="EBI-10171697">
        <id>Q6A162</id>
    </interactant>
    <interactant intactId="EBI-10258233">
        <id>Q7Z7H3</id>
        <label>CATIP</label>
    </interactant>
    <organismsDiffer>false</organismsDiffer>
    <experiments>3</experiments>
</comment>
<comment type="interaction">
    <interactant intactId="EBI-10171697">
        <id>Q6A162</id>
    </interactant>
    <interactant intactId="EBI-712912">
        <id>Q9HC52</id>
        <label>CBX8</label>
    </interactant>
    <organismsDiffer>false</organismsDiffer>
    <experiments>6</experiments>
</comment>
<comment type="interaction">
    <interactant intactId="EBI-10171697">
        <id>Q6A162</id>
    </interactant>
    <interactant intactId="EBI-745040">
        <id>Q8NEF3</id>
        <label>CCDC112</label>
    </interactant>
    <organismsDiffer>false</organismsDiffer>
    <experiments>3</experiments>
</comment>
<comment type="interaction">
    <interactant intactId="EBI-10171697">
        <id>Q6A162</id>
    </interactant>
    <interactant intactId="EBI-744311">
        <id>Q8IYX3</id>
        <label>CCDC116</label>
    </interactant>
    <organismsDiffer>false</organismsDiffer>
    <experiments>3</experiments>
</comment>
<comment type="interaction">
    <interactant intactId="EBI-10171697">
        <id>Q6A162</id>
    </interactant>
    <interactant intactId="EBI-10185348">
        <id>Q96HB5-4</id>
        <label>CCDC120</label>
    </interactant>
    <organismsDiffer>false</organismsDiffer>
    <experiments>4</experiments>
</comment>
<comment type="interaction">
    <interactant intactId="EBI-10171697">
        <id>Q6A162</id>
    </interactant>
    <interactant intactId="EBI-10247802">
        <id>Q8IYE0-2</id>
        <label>CCDC146</label>
    </interactant>
    <organismsDiffer>false</organismsDiffer>
    <experiments>3</experiments>
</comment>
<comment type="interaction">
    <interactant intactId="EBI-10171697">
        <id>Q6A162</id>
    </interactant>
    <interactant intactId="EBI-740814">
        <id>Q8N715</id>
        <label>CCDC185</label>
    </interactant>
    <organismsDiffer>false</organismsDiffer>
    <experiments>6</experiments>
</comment>
<comment type="interaction">
    <interactant intactId="EBI-10171697">
        <id>Q6A162</id>
    </interactant>
    <interactant intactId="EBI-10238351">
        <id>Q9NVL8</id>
        <label>CCDC198</label>
    </interactant>
    <organismsDiffer>false</organismsDiffer>
    <experiments>3</experiments>
</comment>
<comment type="interaction">
    <interactant intactId="EBI-10171697">
        <id>Q6A162</id>
    </interactant>
    <interactant intactId="EBI-746041">
        <id>Q8TC90</id>
        <label>CCER1</label>
    </interactant>
    <organismsDiffer>false</organismsDiffer>
    <experiments>3</experiments>
</comment>
<comment type="interaction">
    <interactant intactId="EBI-10171697">
        <id>Q6A162</id>
    </interactant>
    <interactant intactId="EBI-10175300">
        <id>Q8TD31-3</id>
        <label>CCHCR1</label>
    </interactant>
    <organismsDiffer>false</organismsDiffer>
    <experiments>6</experiments>
</comment>
<comment type="interaction">
    <interactant intactId="EBI-10171697">
        <id>Q6A162</id>
    </interactant>
    <interactant intactId="EBI-3905829">
        <id>P51959</id>
        <label>CCNG1</label>
    </interactant>
    <organismsDiffer>false</organismsDiffer>
    <experiments>3</experiments>
</comment>
<comment type="interaction">
    <interactant intactId="EBI-10171697">
        <id>Q6A162</id>
    </interactant>
    <interactant intactId="EBI-3906571">
        <id>P20138</id>
        <label>CD33</label>
    </interactant>
    <organismsDiffer>false</organismsDiffer>
    <experiments>3</experiments>
</comment>
<comment type="interaction">
    <interactant intactId="EBI-10171697">
        <id>Q6A162</id>
    </interactant>
    <interactant intactId="EBI-10260504">
        <id>Q86Y33</id>
        <label>CDC20B</label>
    </interactant>
    <organismsDiffer>false</organismsDiffer>
    <experiments>3</experiments>
</comment>
<comment type="interaction">
    <interactant intactId="EBI-10171697">
        <id>Q6A162</id>
    </interactant>
    <interactant intactId="EBI-746238">
        <id>Q07002</id>
        <label>CDK18</label>
    </interactant>
    <organismsDiffer>false</organismsDiffer>
    <experiments>3</experiments>
</comment>
<comment type="interaction">
    <interactant intactId="EBI-10171697">
        <id>Q6A162</id>
    </interactant>
    <interactant intactId="EBI-10266998">
        <id>Q8N619</id>
        <label>CDK5R1</label>
    </interactant>
    <organismsDiffer>false</organismsDiffer>
    <experiments>3</experiments>
</comment>
<comment type="interaction">
    <interactant intactId="EBI-10171697">
        <id>Q6A162</id>
    </interactant>
    <interactant intactId="EBI-308614">
        <id>Q86XR8</id>
        <label>CEP57</label>
    </interactant>
    <organismsDiffer>false</organismsDiffer>
    <experiments>3</experiments>
</comment>
<comment type="interaction">
    <interactant intactId="EBI-10171697">
        <id>Q6A162</id>
    </interactant>
    <interactant intactId="EBI-1104570">
        <id>Q8IYX8</id>
        <label>CEP57L1</label>
    </interactant>
    <organismsDiffer>false</organismsDiffer>
    <experiments>3</experiments>
</comment>
<comment type="interaction">
    <interactant intactId="EBI-10171697">
        <id>Q6A162</id>
    </interactant>
    <interactant intactId="EBI-10181988">
        <id>Q8IYX8-2</id>
        <label>CEP57L1</label>
    </interactant>
    <organismsDiffer>false</organismsDiffer>
    <experiments>3</experiments>
</comment>
<comment type="interaction">
    <interactant intactId="EBI-10171697">
        <id>Q6A162</id>
    </interactant>
    <interactant intactId="EBI-749051">
        <id>Q8IYR0</id>
        <label>CFAP206</label>
    </interactant>
    <organismsDiffer>false</organismsDiffer>
    <experiments>6</experiments>
</comment>
<comment type="interaction">
    <interactant intactId="EBI-10171697">
        <id>Q6A162</id>
    </interactant>
    <interactant intactId="EBI-2321769">
        <id>Q9Y6H1</id>
        <label>CHCHD2</label>
    </interactant>
    <organismsDiffer>false</organismsDiffer>
    <experiments>3</experiments>
</comment>
<comment type="interaction">
    <interactant intactId="EBI-10171697">
        <id>Q6A162</id>
    </interactant>
    <interactant intactId="EBI-743375">
        <id>Q9NX63</id>
        <label>CHCHD3</label>
    </interactant>
    <organismsDiffer>false</organismsDiffer>
    <experiments>3</experiments>
</comment>
<comment type="interaction">
    <interactant intactId="EBI-10171697">
        <id>Q6A162</id>
    </interactant>
    <interactant intactId="EBI-741528">
        <id>Q9UKJ5</id>
        <label>CHIC2</label>
    </interactant>
    <organismsDiffer>false</organismsDiffer>
    <experiments>3</experiments>
</comment>
<comment type="interaction">
    <interactant intactId="EBI-10171697">
        <id>Q6A162</id>
    </interactant>
    <interactant intactId="EBI-10173491">
        <id>A5D8T8</id>
        <label>CLEC18A</label>
    </interactant>
    <organismsDiffer>false</organismsDiffer>
    <experiments>3</experiments>
</comment>
<comment type="interaction">
    <interactant intactId="EBI-10171697">
        <id>Q6A162</id>
    </interactant>
    <interactant intactId="EBI-741032">
        <id>Q8NE01</id>
        <label>CNNM3</label>
    </interactant>
    <organismsDiffer>false</organismsDiffer>
    <experiments>3</experiments>
</comment>
<comment type="interaction">
    <interactant intactId="EBI-10171697">
        <id>Q6A162</id>
    </interactant>
    <interactant intactId="EBI-1050897">
        <id>P26441</id>
        <label>CNTF</label>
    </interactant>
    <organismsDiffer>false</organismsDiffer>
    <experiments>3</experiments>
</comment>
<comment type="interaction">
    <interactant intactId="EBI-10171697">
        <id>Q6A162</id>
    </interactant>
    <interactant intactId="EBI-747133">
        <id>P27658</id>
        <label>COL8A1</label>
    </interactant>
    <organismsDiffer>false</organismsDiffer>
    <experiments>3</experiments>
</comment>
<comment type="interaction">
    <interactant intactId="EBI-10171697">
        <id>Q6A162</id>
    </interactant>
    <interactant intactId="EBI-10200977">
        <id>P21964-2</id>
        <label>COMT</label>
    </interactant>
    <organismsDiffer>false</organismsDiffer>
    <experiments>3</experiments>
</comment>
<comment type="interaction">
    <interactant intactId="EBI-10171697">
        <id>Q6A162</id>
    </interactant>
    <interactant intactId="EBI-715032">
        <id>P20674</id>
        <label>COX5A</label>
    </interactant>
    <organismsDiffer>false</organismsDiffer>
    <experiments>3</experiments>
</comment>
<comment type="interaction">
    <interactant intactId="EBI-10171697">
        <id>Q6A162</id>
    </interactant>
    <interactant intactId="EBI-10192698">
        <id>Q02930-3</id>
        <label>CREB5</label>
    </interactant>
    <organismsDiffer>false</organismsDiffer>
    <experiments>6</experiments>
</comment>
<comment type="interaction">
    <interactant intactId="EBI-10171697">
        <id>Q6A162</id>
    </interactant>
    <interactant intactId="EBI-2212355">
        <id>Q49AN0</id>
        <label>CRY2</label>
    </interactant>
    <organismsDiffer>false</organismsDiffer>
    <experiments>3</experiments>
</comment>
<comment type="interaction">
    <interactant intactId="EBI-10171697">
        <id>Q6A162</id>
    </interactant>
    <interactant intactId="EBI-8636823">
        <id>Q9UBR2</id>
        <label>CTSZ</label>
    </interactant>
    <organismsDiffer>false</organismsDiffer>
    <experiments>3</experiments>
</comment>
<comment type="interaction">
    <interactant intactId="EBI-10171697">
        <id>Q6A162</id>
    </interactant>
    <interactant intactId="EBI-5453285">
        <id>Q2TBE0</id>
        <label>CWF19L2</label>
    </interactant>
    <organismsDiffer>false</organismsDiffer>
    <experiments>3</experiments>
</comment>
<comment type="interaction">
    <interactant intactId="EBI-10171697">
        <id>Q6A162</id>
    </interactant>
    <interactant intactId="EBI-446479">
        <id>P99999</id>
        <label>CYCS</label>
    </interactant>
    <organismsDiffer>false</organismsDiffer>
    <experiments>6</experiments>
</comment>
<comment type="interaction">
    <interactant intactId="EBI-10171697">
        <id>Q6A162</id>
    </interactant>
    <interactant intactId="EBI-10277443">
        <id>Q8WWE8</id>
        <label>CYTH4</label>
    </interactant>
    <organismsDiffer>false</organismsDiffer>
    <experiments>3</experiments>
</comment>
<comment type="interaction">
    <interactant intactId="EBI-10171697">
        <id>Q6A162</id>
    </interactant>
    <interactant intactId="EBI-10249414">
        <id>Q6DCB0</id>
        <label>DAAM2</label>
    </interactant>
    <organismsDiffer>false</organismsDiffer>
    <experiments>3</experiments>
</comment>
<comment type="interaction">
    <interactant intactId="EBI-10171697">
        <id>Q6A162</id>
    </interactant>
    <interactant intactId="EBI-10173222">
        <id>A2VCK2</id>
        <label>DCDC2B</label>
    </interactant>
    <organismsDiffer>false</organismsDiffer>
    <experiments>3</experiments>
</comment>
<comment type="interaction">
    <interactant intactId="EBI-10171697">
        <id>Q6A162</id>
    </interactant>
    <interactant intactId="EBI-8646694">
        <id>O43602</id>
        <label>DCX</label>
    </interactant>
    <organismsDiffer>false</organismsDiffer>
    <experiments>3</experiments>
</comment>
<comment type="interaction">
    <interactant intactId="EBI-10171697">
        <id>Q6A162</id>
    </interactant>
    <interactant intactId="EBI-351257">
        <id>P26196</id>
        <label>DDX6</label>
    </interactant>
    <organismsDiffer>false</organismsDiffer>
    <experiments>3</experiments>
</comment>
<comment type="interaction">
    <interactant intactId="EBI-10171697">
        <id>Q6A162</id>
    </interactant>
    <interactant intactId="EBI-1051531">
        <id>Q6P158</id>
        <label>DHX57</label>
    </interactant>
    <organismsDiffer>false</organismsDiffer>
    <experiments>3</experiments>
</comment>
<comment type="interaction">
    <interactant intactId="EBI-10171697">
        <id>Q6A162</id>
    </interactant>
    <interactant intactId="EBI-1753397">
        <id>Q9P1A6</id>
        <label>DLGAP2</label>
    </interactant>
    <organismsDiffer>false</organismsDiffer>
    <experiments>4</experiments>
</comment>
<comment type="interaction">
    <interactant intactId="EBI-10171697">
        <id>Q6A162</id>
    </interactant>
    <interactant intactId="EBI-9679045">
        <id>Q9NQL9</id>
        <label>DMRT3</label>
    </interactant>
    <organismsDiffer>false</organismsDiffer>
    <experiments>6</experiments>
</comment>
<comment type="interaction">
    <interactant intactId="EBI-10171697">
        <id>Q6A162</id>
    </interactant>
    <interactant intactId="EBI-448771">
        <id>Q92608</id>
        <label>DOCK2</label>
    </interactant>
    <organismsDiffer>false</organismsDiffer>
    <experiments>6</experiments>
</comment>
<comment type="interaction">
    <interactant intactId="EBI-10171697">
        <id>Q6A162</id>
    </interactant>
    <interactant intactId="EBI-2548605">
        <id>Q8NF50</id>
        <label>DOCK8</label>
    </interactant>
    <organismsDiffer>false</organismsDiffer>
    <experiments>3</experiments>
</comment>
<comment type="interaction">
    <interactant intactId="EBI-10171697">
        <id>Q6A162</id>
    </interactant>
    <interactant intactId="EBI-740402">
        <id>O60941</id>
        <label>DTNB</label>
    </interactant>
    <organismsDiffer>false</organismsDiffer>
    <experiments>3</experiments>
</comment>
<comment type="interaction">
    <interactant intactId="EBI-10171697">
        <id>Q6A162</id>
    </interactant>
    <interactant intactId="EBI-398610">
        <id>O60573</id>
        <label>EIF4E2</label>
    </interactant>
    <organismsDiffer>false</organismsDiffer>
    <experiments>3</experiments>
</comment>
<comment type="interaction">
    <interactant intactId="EBI-10171697">
        <id>Q6A162</id>
    </interactant>
    <interactant intactId="EBI-10250477">
        <id>Q6ISP9</id>
        <label>ELA2B</label>
    </interactant>
    <organismsDiffer>false</organismsDiffer>
    <experiments>3</experiments>
</comment>
<comment type="interaction">
    <interactant intactId="EBI-10171697">
        <id>Q6A162</id>
    </interactant>
    <interactant intactId="EBI-742350">
        <id>Q14241</id>
        <label>ELOA</label>
    </interactant>
    <organismsDiffer>false</organismsDiffer>
    <experiments>3</experiments>
</comment>
<comment type="interaction">
    <interactant intactId="EBI-10171697">
        <id>Q6A162</id>
    </interactant>
    <interactant intactId="EBI-744099">
        <id>Q9H0I2</id>
        <label>ENKD1</label>
    </interactant>
    <organismsDiffer>false</organismsDiffer>
    <experiments>3</experiments>
</comment>
<comment type="interaction">
    <interactant intactId="EBI-10171697">
        <id>Q6A162</id>
    </interactant>
    <interactant intactId="EBI-749333">
        <id>Q8N2X6</id>
        <label>EXOC3-AS1</label>
    </interactant>
    <organismsDiffer>false</organismsDiffer>
    <experiments>3</experiments>
</comment>
<comment type="interaction">
    <interactant intactId="EBI-10171697">
        <id>Q6A162</id>
    </interactant>
    <interactant intactId="EBI-12057609">
        <id>O95864-3</id>
        <label>FADS2</label>
    </interactant>
    <organismsDiffer>false</organismsDiffer>
    <experiments>3</experiments>
</comment>
<comment type="interaction">
    <interactant intactId="EBI-10171697">
        <id>Q6A162</id>
    </interactant>
    <interactant intactId="EBI-10192902">
        <id>O95990-3</id>
        <label>FAM107A</label>
    </interactant>
    <organismsDiffer>false</organismsDiffer>
    <experiments>3</experiments>
</comment>
<comment type="interaction">
    <interactant intactId="EBI-10171697">
        <id>Q6A162</id>
    </interactant>
    <interactant intactId="EBI-741626">
        <id>Q9H5Z6</id>
        <label>FAM124B</label>
    </interactant>
    <organismsDiffer>false</organismsDiffer>
    <experiments>3</experiments>
</comment>
<comment type="interaction">
    <interactant intactId="EBI-10171697">
        <id>Q6A162</id>
    </interactant>
    <interactant intactId="EBI-2602739">
        <id>Q08E93</id>
        <label>FAM27E3</label>
    </interactant>
    <organismsDiffer>false</organismsDiffer>
    <experiments>3</experiments>
</comment>
<comment type="interaction">
    <interactant intactId="EBI-10171697">
        <id>Q6A162</id>
    </interactant>
    <interactant intactId="EBI-6658203">
        <id>Q86YD7</id>
        <label>FAM90A1</label>
    </interactant>
    <organismsDiffer>false</organismsDiffer>
    <experiments>6</experiments>
</comment>
<comment type="interaction">
    <interactant intactId="EBI-10171697">
        <id>Q6A162</id>
    </interactant>
    <interactant intactId="EBI-2513774">
        <id>O95363</id>
        <label>FARS2</label>
    </interactant>
    <organismsDiffer>false</organismsDiffer>
    <experiments>6</experiments>
</comment>
<comment type="interaction">
    <interactant intactId="EBI-10171697">
        <id>Q6A162</id>
    </interactant>
    <interactant intactId="EBI-495538">
        <id>P48023</id>
        <label>FASLG</label>
    </interactant>
    <organismsDiffer>false</organismsDiffer>
    <experiments>3</experiments>
</comment>
<comment type="interaction">
    <interactant intactId="EBI-10171697">
        <id>Q6A162</id>
    </interactant>
    <interactant intactId="EBI-10244131">
        <id>Q8TES7-6</id>
        <label>FBF1</label>
    </interactant>
    <organismsDiffer>false</organismsDiffer>
    <experiments>3</experiments>
</comment>
<comment type="interaction">
    <interactant intactId="EBI-10171697">
        <id>Q6A162</id>
    </interactant>
    <interactant intactId="EBI-744419">
        <id>Q96D16</id>
        <label>FBXL18</label>
    </interactant>
    <organismsDiffer>false</organismsDiffer>
    <experiments>3</experiments>
</comment>
<comment type="interaction">
    <interactant intactId="EBI-10171697">
        <id>Q6A162</id>
    </interactant>
    <interactant intactId="EBI-719816">
        <id>Q9NWN3</id>
        <label>FBXO34</label>
    </interactant>
    <organismsDiffer>false</organismsDiffer>
    <experiments>3</experiments>
</comment>
<comment type="interaction">
    <interactant intactId="EBI-10171697">
        <id>Q6A162</id>
    </interactant>
    <interactant intactId="EBI-741068">
        <id>Q969U6</id>
        <label>FBXW5</label>
    </interactant>
    <organismsDiffer>false</organismsDiffer>
    <experiments>3</experiments>
</comment>
<comment type="interaction">
    <interactant intactId="EBI-10171697">
        <id>Q6A162</id>
    </interactant>
    <interactant intactId="EBI-11988727">
        <id>A0PJY2</id>
        <label>FEZF1</label>
    </interactant>
    <organismsDiffer>false</organismsDiffer>
    <experiments>3</experiments>
</comment>
<comment type="interaction">
    <interactant intactId="EBI-10171697">
        <id>Q6A162</id>
    </interactant>
    <interactant intactId="EBI-6693977">
        <id>P68106</id>
        <label>FKBP1B</label>
    </interactant>
    <organismsDiffer>false</organismsDiffer>
    <experiments>3</experiments>
</comment>
<comment type="interaction">
    <interactant intactId="EBI-10171697">
        <id>Q6A162</id>
    </interactant>
    <interactant intactId="EBI-7226406">
        <id>Q9H5C5</id>
        <label>FLJ23584</label>
    </interactant>
    <organismsDiffer>false</organismsDiffer>
    <experiments>3</experiments>
</comment>
<comment type="interaction">
    <interactant intactId="EBI-10171697">
        <id>Q6A162</id>
    </interactant>
    <interactant intactId="EBI-744935">
        <id>Q9BVV2</id>
        <label>FNDC11</label>
    </interactant>
    <organismsDiffer>false</organismsDiffer>
    <experiments>3</experiments>
</comment>
<comment type="interaction">
    <interactant intactId="EBI-10171697">
        <id>Q6A162</id>
    </interactant>
    <interactant intactId="EBI-3916225">
        <id>Q99853</id>
        <label>FOXB1</label>
    </interactant>
    <organismsDiffer>false</organismsDiffer>
    <experiments>3</experiments>
</comment>
<comment type="interaction">
    <interactant intactId="EBI-10171697">
        <id>Q6A162</id>
    </interactant>
    <interactant intactId="EBI-2515248">
        <id>Q14331</id>
        <label>FRG1</label>
    </interactant>
    <organismsDiffer>false</organismsDiffer>
    <experiments>3</experiments>
</comment>
<comment type="interaction">
    <interactant intactId="EBI-10171697">
        <id>Q6A162</id>
    </interactant>
    <interactant intactId="EBI-16430771">
        <id>A0A0S2Z4D9</id>
        <label>GAD1</label>
    </interactant>
    <organismsDiffer>false</organismsDiffer>
    <experiments>3</experiments>
</comment>
<comment type="interaction">
    <interactant intactId="EBI-10171697">
        <id>Q6A162</id>
    </interactant>
    <interactant intactId="EBI-372506">
        <id>Q8TAE8</id>
        <label>GADD45GIP1</label>
    </interactant>
    <organismsDiffer>false</organismsDiffer>
    <experiments>3</experiments>
</comment>
<comment type="interaction">
    <interactant intactId="EBI-10171697">
        <id>Q6A162</id>
    </interactant>
    <interactant intactId="EBI-752049">
        <id>Q8NEG0</id>
        <label>GARIN6</label>
    </interactant>
    <organismsDiffer>false</organismsDiffer>
    <experiments>3</experiments>
</comment>
<comment type="interaction">
    <interactant intactId="EBI-10171697">
        <id>Q6A162</id>
    </interactant>
    <interactant intactId="EBI-2806671">
        <id>P23769</id>
        <label>GATA2</label>
    </interactant>
    <organismsDiffer>false</organismsDiffer>
    <experiments>3</experiments>
</comment>
<comment type="interaction">
    <interactant intactId="EBI-10171697">
        <id>Q6A162</id>
    </interactant>
    <interactant intactId="EBI-10261080">
        <id>Q86YP4-3</id>
        <label>GATAD2A</label>
    </interactant>
    <organismsDiffer>false</organismsDiffer>
    <experiments>3</experiments>
</comment>
<comment type="interaction">
    <interactant intactId="EBI-10171697">
        <id>Q6A162</id>
    </interactant>
    <interactant intactId="EBI-744104">
        <id>P55040</id>
        <label>GEM</label>
    </interactant>
    <organismsDiffer>false</organismsDiffer>
    <experiments>3</experiments>
</comment>
<comment type="interaction">
    <interactant intactId="EBI-10171697">
        <id>Q6A162</id>
    </interactant>
    <interactant intactId="EBI-8799578">
        <id>Q9NXC2</id>
        <label>GFOD1</label>
    </interactant>
    <organismsDiffer>false</organismsDiffer>
    <experiments>3</experiments>
</comment>
<comment type="interaction">
    <interactant intactId="EBI-10171697">
        <id>Q6A162</id>
    </interactant>
    <interactant intactId="EBI-10259069">
        <id>Q86UU5</id>
        <label>GGN</label>
    </interactant>
    <organismsDiffer>false</organismsDiffer>
    <experiments>3</experiments>
</comment>
<comment type="interaction">
    <interactant intactId="EBI-10171697">
        <id>Q6A162</id>
    </interactant>
    <interactant intactId="EBI-353997">
        <id>P04899</id>
        <label>GNAI2</label>
    </interactant>
    <organismsDiffer>false</organismsDiffer>
    <experiments>3</experiments>
</comment>
<comment type="interaction">
    <interactant intactId="EBI-10171697">
        <id>Q6A162</id>
    </interactant>
    <interactant intactId="EBI-11975289">
        <id>Q9Y223-2</id>
        <label>GNE</label>
    </interactant>
    <organismsDiffer>false</organismsDiffer>
    <experiments>3</experiments>
</comment>
<comment type="interaction">
    <interactant intactId="EBI-10171697">
        <id>Q6A162</id>
    </interactant>
    <interactant intactId="EBI-10220734">
        <id>P63218</id>
        <label>GNG5</label>
    </interactant>
    <organismsDiffer>false</organismsDiffer>
    <experiments>3</experiments>
</comment>
<comment type="interaction">
    <interactant intactId="EBI-10171697">
        <id>Q6A162</id>
    </interactant>
    <interactant intactId="EBI-10268729">
        <id>Q8N9W4-2</id>
        <label>GOLGA6L2</label>
    </interactant>
    <organismsDiffer>false</organismsDiffer>
    <experiments>3</experiments>
</comment>
<comment type="interaction">
    <interactant intactId="EBI-10171697">
        <id>Q6A162</id>
    </interactant>
    <interactant intactId="EBI-5666657">
        <id>Q9NWQ4</id>
        <label>GPATCH2L</label>
    </interactant>
    <organismsDiffer>false</organismsDiffer>
    <experiments>3</experiments>
</comment>
<comment type="interaction">
    <interactant intactId="EBI-10171697">
        <id>Q6A162</id>
    </interactant>
    <interactant intactId="EBI-1045409">
        <id>Q9Y5Q8</id>
        <label>GTF3C5</label>
    </interactant>
    <organismsDiffer>false</organismsDiffer>
    <experiments>3</experiments>
</comment>
<comment type="interaction">
    <interactant intactId="EBI-10171697">
        <id>Q6A162</id>
    </interactant>
    <interactant intactId="EBI-8293751">
        <id>Q96NT3</id>
        <label>GUCD1</label>
    </interactant>
    <organismsDiffer>false</organismsDiffer>
    <experiments>3</experiments>
</comment>
<comment type="interaction">
    <interactant intactId="EBI-10171697">
        <id>Q6A162</id>
    </interactant>
    <interactant intactId="EBI-11956675">
        <id>Q9GZV7</id>
        <label>HAPLN2</label>
    </interactant>
    <organismsDiffer>false</organismsDiffer>
    <experiments>3</experiments>
</comment>
<comment type="interaction">
    <interactant intactId="EBI-10171697">
        <id>Q6A162</id>
    </interactant>
    <interactant intactId="EBI-2514791">
        <id>Q96CS2</id>
        <label>HAUS1</label>
    </interactant>
    <organismsDiffer>false</organismsDiffer>
    <experiments>3</experiments>
</comment>
<comment type="interaction">
    <interactant intactId="EBI-10171697">
        <id>Q6A162</id>
    </interactant>
    <interactant intactId="EBI-714680">
        <id>P69905</id>
        <label>HBA2</label>
    </interactant>
    <organismsDiffer>false</organismsDiffer>
    <experiments>3</experiments>
</comment>
<comment type="interaction">
    <interactant intactId="EBI-10171697">
        <id>Q6A162</id>
    </interactant>
    <interactant intactId="EBI-719843">
        <id>P02008</id>
        <label>HBZ</label>
    </interactant>
    <organismsDiffer>false</organismsDiffer>
    <experiments>3</experiments>
</comment>
<comment type="interaction">
    <interactant intactId="EBI-10171697">
        <id>Q6A162</id>
    </interactant>
    <interactant intactId="EBI-346340">
        <id>P08631</id>
        <label>HCK</label>
    </interactant>
    <organismsDiffer>false</organismsDiffer>
    <experiments>3</experiments>
</comment>
<comment type="interaction">
    <interactant intactId="EBI-10171697">
        <id>Q6A162</id>
    </interactant>
    <interactant intactId="EBI-9834454">
        <id>P08631-2</id>
        <label>HCK</label>
    </interactant>
    <organismsDiffer>false</organismsDiffer>
    <experiments>3</experiments>
</comment>
<comment type="interaction">
    <interactant intactId="EBI-10171697">
        <id>Q6A162</id>
    </interactant>
    <interactant intactId="EBI-308629">
        <id>P56524</id>
        <label>HDAC4</label>
    </interactant>
    <organismsDiffer>false</organismsDiffer>
    <experiments>3</experiments>
</comment>
<comment type="interaction">
    <interactant intactId="EBI-10171697">
        <id>Q6A162</id>
    </interactant>
    <interactant intactId="EBI-11953488">
        <id>P56524-2</id>
        <label>HDAC4</label>
    </interactant>
    <organismsDiffer>false</organismsDiffer>
    <experiments>3</experiments>
</comment>
<comment type="interaction">
    <interactant intactId="EBI-10171697">
        <id>Q6A162</id>
    </interactant>
    <interactant intactId="EBI-10330335">
        <id>V9HWJ5</id>
        <label>HEL-S-90n</label>
    </interactant>
    <organismsDiffer>false</organismsDiffer>
    <experiments>3</experiments>
</comment>
<comment type="interaction">
    <interactant intactId="EBI-10171697">
        <id>Q6A162</id>
    </interactant>
    <interactant intactId="EBI-740220">
        <id>O14964</id>
        <label>HGS</label>
    </interactant>
    <organismsDiffer>false</organismsDiffer>
    <experiments>6</experiments>
</comment>
<comment type="interaction">
    <interactant intactId="EBI-10171697">
        <id>Q6A162</id>
    </interactant>
    <interactant intactId="EBI-740785">
        <id>P49639</id>
        <label>HOXA1</label>
    </interactant>
    <organismsDiffer>false</organismsDiffer>
    <experiments>3</experiments>
</comment>
<comment type="interaction">
    <interactant intactId="EBI-10171697">
        <id>Q6A162</id>
    </interactant>
    <interactant intactId="EBI-745290">
        <id>P17482</id>
        <label>HOXB9</label>
    </interactant>
    <organismsDiffer>false</organismsDiffer>
    <experiments>3</experiments>
</comment>
<comment type="interaction">
    <interactant intactId="EBI-10171697">
        <id>Q6A162</id>
    </interactant>
    <interactant intactId="EBI-1752118">
        <id>P31273</id>
        <label>HOXC8</label>
    </interactant>
    <organismsDiffer>false</organismsDiffer>
    <experiments>3</experiments>
</comment>
<comment type="interaction">
    <interactant intactId="EBI-10171697">
        <id>Q6A162</id>
    </interactant>
    <interactant intactId="EBI-3918847">
        <id>Q9H2F3</id>
        <label>HSD3B7</label>
    </interactant>
    <organismsDiffer>false</organismsDiffer>
    <experiments>3</experiments>
</comment>
<comment type="interaction">
    <interactant intactId="EBI-10171697">
        <id>Q6A162</id>
    </interactant>
    <interactant intactId="EBI-12056251">
        <id>Q9ULV5-2</id>
        <label>HSF4</label>
    </interactant>
    <organismsDiffer>false</organismsDiffer>
    <experiments>3</experiments>
</comment>
<comment type="interaction">
    <interactant intactId="EBI-10171697">
        <id>Q6A162</id>
    </interactant>
    <interactant intactId="EBI-10291310">
        <id>Q96MM6</id>
        <label>HSPA12B</label>
    </interactant>
    <organismsDiffer>false</organismsDiffer>
    <experiments>3</experiments>
</comment>
<comment type="interaction">
    <interactant intactId="EBI-10171697">
        <id>Q6A162</id>
    </interactant>
    <interactant intactId="EBI-352528">
        <id>P10809</id>
        <label>HSPD1</label>
    </interactant>
    <organismsDiffer>false</organismsDiffer>
    <experiments>3</experiments>
</comment>
<comment type="interaction">
    <interactant intactId="EBI-10171697">
        <id>Q6A162</id>
    </interactant>
    <interactant intactId="EBI-488533">
        <id>Q8WYH8</id>
        <label>ING5</label>
    </interactant>
    <organismsDiffer>false</organismsDiffer>
    <experiments>3</experiments>
</comment>
<comment type="interaction">
    <interactant intactId="EBI-10171697">
        <id>Q6A162</id>
    </interactant>
    <interactant intactId="EBI-715611">
        <id>Q9C086</id>
        <label>INO80B</label>
    </interactant>
    <organismsDiffer>false</organismsDiffer>
    <experiments>3</experiments>
</comment>
<comment type="interaction">
    <interactant intactId="EBI-10171697">
        <id>Q6A162</id>
    </interactant>
    <interactant intactId="EBI-1380477">
        <id>Q92835</id>
        <label>INPP5D</label>
    </interactant>
    <organismsDiffer>false</organismsDiffer>
    <experiments>3</experiments>
</comment>
<comment type="interaction">
    <interactant intactId="EBI-10171697">
        <id>Q6A162</id>
    </interactant>
    <interactant intactId="EBI-10220600">
        <id>Q8NA54</id>
        <label>IQUB</label>
    </interactant>
    <organismsDiffer>false</organismsDiffer>
    <experiments>3</experiments>
</comment>
<comment type="interaction">
    <interactant intactId="EBI-10171697">
        <id>Q6A162</id>
    </interactant>
    <interactant intactId="EBI-1047335">
        <id>Q9H1K1</id>
        <label>ISCU</label>
    </interactant>
    <organismsDiffer>false</organismsDiffer>
    <experiments>3</experiments>
</comment>
<comment type="interaction">
    <interactant intactId="EBI-10171697">
        <id>Q6A162</id>
    </interactant>
    <interactant intactId="EBI-11051601">
        <id>P16144-2</id>
        <label>ITGB4</label>
    </interactant>
    <organismsDiffer>false</organismsDiffer>
    <experiments>3</experiments>
</comment>
<comment type="interaction">
    <interactant intactId="EBI-10171697">
        <id>Q6A162</id>
    </interactant>
    <interactant intactId="EBI-10178729">
        <id>L7RT22</id>
        <label>ITGB5</label>
    </interactant>
    <organismsDiffer>false</organismsDiffer>
    <experiments>3</experiments>
</comment>
<comment type="interaction">
    <interactant intactId="EBI-10171697">
        <id>Q6A162</id>
    </interactant>
    <interactant intactId="EBI-2510602">
        <id>Q15040</id>
        <label>JOSD1</label>
    </interactant>
    <organismsDiffer>false</organismsDiffer>
    <experiments>6</experiments>
</comment>
<comment type="interaction">
    <interactant intactId="EBI-10171697">
        <id>Q6A162</id>
    </interactant>
    <interactant intactId="EBI-2556193">
        <id>Q63ZY3</id>
        <label>KANK2</label>
    </interactant>
    <organismsDiffer>false</organismsDiffer>
    <experiments>3</experiments>
</comment>
<comment type="interaction">
    <interactant intactId="EBI-10171697">
        <id>Q6A162</id>
    </interactant>
    <interactant intactId="EBI-399080">
        <id>Q92993</id>
        <label>KAT5</label>
    </interactant>
    <organismsDiffer>false</organismsDiffer>
    <experiments>3</experiments>
</comment>
<comment type="interaction">
    <interactant intactId="EBI-10171697">
        <id>Q6A162</id>
    </interactant>
    <interactant intactId="EBI-4397613">
        <id>Q7L273</id>
        <label>KCTD9</label>
    </interactant>
    <organismsDiffer>false</organismsDiffer>
    <experiments>3</experiments>
</comment>
<comment type="interaction">
    <interactant intactId="EBI-10171697">
        <id>Q6A162</id>
    </interactant>
    <interactant intactId="EBI-710124">
        <id>O60341</id>
        <label>KDM1A</label>
    </interactant>
    <organismsDiffer>false</organismsDiffer>
    <experiments>3</experiments>
</comment>
<comment type="interaction">
    <interactant intactId="EBI-10171697">
        <id>Q6A162</id>
    </interactant>
    <interactant intactId="EBI-2125614">
        <id>Q9BVG8</id>
        <label>KIFC3</label>
    </interactant>
    <organismsDiffer>false</organismsDiffer>
    <experiments>3</experiments>
</comment>
<comment type="interaction">
    <interactant intactId="EBI-10171697">
        <id>Q6A162</id>
    </interactant>
    <interactant intactId="EBI-6426443">
        <id>Q2WGJ6</id>
        <label>KLHL38</label>
    </interactant>
    <organismsDiffer>false</organismsDiffer>
    <experiments>3</experiments>
</comment>
<comment type="interaction">
    <interactant intactId="EBI-10171697">
        <id>Q6A162</id>
    </interactant>
    <interactant intactId="EBI-349938">
        <id>P52292</id>
        <label>KPNA2</label>
    </interactant>
    <organismsDiffer>false</organismsDiffer>
    <experiments>3</experiments>
</comment>
<comment type="interaction">
    <interactant intactId="EBI-10171697">
        <id>Q6A162</id>
    </interactant>
    <interactant intactId="EBI-1247312">
        <id>P35908</id>
        <label>KRT2</label>
    </interactant>
    <organismsDiffer>false</organismsDiffer>
    <experiments>11</experiments>
</comment>
<comment type="interaction">
    <interactant intactId="EBI-10171697">
        <id>Q6A162</id>
    </interactant>
    <interactant intactId="EBI-742094">
        <id>P35900</id>
        <label>KRT20</label>
    </interactant>
    <organismsDiffer>false</organismsDiffer>
    <experiments>3</experiments>
</comment>
<comment type="interaction">
    <interactant intactId="EBI-10171697">
        <id>Q6A162</id>
    </interactant>
    <interactant intactId="EBI-2371606">
        <id>P19013</id>
        <label>KRT4</label>
    </interactant>
    <organismsDiffer>false</organismsDiffer>
    <experiments>7</experiments>
</comment>
<comment type="interaction">
    <interactant intactId="EBI-10171697">
        <id>Q6A162</id>
    </interactant>
    <interactant intactId="EBI-702187">
        <id>P13647</id>
        <label>KRT5</label>
    </interactant>
    <organismsDiffer>false</organismsDiffer>
    <experiments>6</experiments>
</comment>
<comment type="interaction">
    <interactant intactId="EBI-10171697">
        <id>Q6A162</id>
    </interactant>
    <interactant intactId="EBI-702198">
        <id>P02538</id>
        <label>KRT6A</label>
    </interactant>
    <organismsDiffer>false</organismsDiffer>
    <experiments>14</experiments>
</comment>
<comment type="interaction">
    <interactant intactId="EBI-10171697">
        <id>Q6A162</id>
    </interactant>
    <interactant intactId="EBI-740907">
        <id>P04259</id>
        <label>KRT6B</label>
    </interactant>
    <organismsDiffer>false</organismsDiffer>
    <experiments>3</experiments>
</comment>
<comment type="interaction">
    <interactant intactId="EBI-10171697">
        <id>Q6A162</id>
    </interactant>
    <interactant intactId="EBI-2564105">
        <id>P48668</id>
        <label>KRT6C</label>
    </interactant>
    <organismsDiffer>false</organismsDiffer>
    <experiments>6</experiments>
</comment>
<comment type="interaction">
    <interactant intactId="EBI-10171697">
        <id>Q6A162</id>
    </interactant>
    <interactant intactId="EBI-2952676">
        <id>Q3SY84</id>
        <label>KRT71</label>
    </interactant>
    <organismsDiffer>false</organismsDiffer>
    <experiments>6</experiments>
</comment>
<comment type="interaction">
    <interactant intactId="EBI-10171697">
        <id>Q6A162</id>
    </interactant>
    <interactant intactId="EBI-1221280">
        <id>Q14CN4</id>
        <label>KRT72</label>
    </interactant>
    <organismsDiffer>false</organismsDiffer>
    <experiments>3</experiments>
</comment>
<comment type="interaction">
    <interactant intactId="EBI-10171697">
        <id>Q6A162</id>
    </interactant>
    <interactant intactId="EBI-2949715">
        <id>O95678</id>
        <label>KRT75</label>
    </interactant>
    <organismsDiffer>false</organismsDiffer>
    <experiments>3</experiments>
</comment>
<comment type="interaction">
    <interactant intactId="EBI-10171697">
        <id>Q6A162</id>
    </interactant>
    <interactant intactId="EBI-2952745">
        <id>Q01546</id>
        <label>KRT76</label>
    </interactant>
    <organismsDiffer>false</organismsDiffer>
    <experiments>3</experiments>
</comment>
<comment type="interaction">
    <interactant intactId="EBI-10171697">
        <id>Q6A162</id>
    </interactant>
    <interactant intactId="EBI-297852">
        <id>P05787</id>
        <label>KRT8</label>
    </interactant>
    <organismsDiffer>false</organismsDiffer>
    <experiments>6</experiments>
</comment>
<comment type="interaction">
    <interactant intactId="EBI-10171697">
        <id>Q6A162</id>
    </interactant>
    <interactant intactId="EBI-739648">
        <id>Q14533</id>
        <label>KRT81</label>
    </interactant>
    <organismsDiffer>false</organismsDiffer>
    <experiments>8</experiments>
</comment>
<comment type="interaction">
    <interactant intactId="EBI-10171697">
        <id>Q6A162</id>
    </interactant>
    <interactant intactId="EBI-1045341">
        <id>Q9NSB4</id>
        <label>KRT82</label>
    </interactant>
    <organismsDiffer>false</organismsDiffer>
    <experiments>3</experiments>
</comment>
<comment type="interaction">
    <interactant intactId="EBI-10171697">
        <id>Q6A162</id>
    </interactant>
    <interactant intactId="EBI-10221390">
        <id>P78385</id>
        <label>KRT83</label>
    </interactant>
    <organismsDiffer>false</organismsDiffer>
    <experiments>3</experiments>
</comment>
<comment type="interaction">
    <interactant intactId="EBI-10171697">
        <id>Q6A162</id>
    </interactant>
    <interactant intactId="EBI-1049371">
        <id>P78386</id>
        <label>KRT85</label>
    </interactant>
    <organismsDiffer>false</organismsDiffer>
    <experiments>3</experiments>
</comment>
<comment type="interaction">
    <interactant intactId="EBI-10171697">
        <id>Q6A162</id>
    </interactant>
    <interactant intactId="EBI-9996498">
        <id>O43790</id>
        <label>KRT86</label>
    </interactant>
    <organismsDiffer>false</organismsDiffer>
    <experiments>3</experiments>
</comment>
<comment type="interaction">
    <interactant intactId="EBI-10171697">
        <id>Q6A162</id>
    </interactant>
    <interactant intactId="EBI-1052105">
        <id>Q14657</id>
        <label>LAGE3</label>
    </interactant>
    <organismsDiffer>false</organismsDiffer>
    <experiments>6</experiments>
</comment>
<comment type="interaction">
    <interactant intactId="EBI-10171697">
        <id>Q6A162</id>
    </interactant>
    <interactant intactId="EBI-10245456">
        <id>Q5T5B0</id>
        <label>LCE3E</label>
    </interactant>
    <organismsDiffer>false</organismsDiffer>
    <experiments>3</experiments>
</comment>
<comment type="interaction">
    <interactant intactId="EBI-10171697">
        <id>Q6A162</id>
    </interactant>
    <interactant intactId="EBI-726510">
        <id>Q96BZ8</id>
        <label>LENG1</label>
    </interactant>
    <organismsDiffer>false</organismsDiffer>
    <experiments>6</experiments>
</comment>
<comment type="interaction">
    <interactant intactId="EBI-10171697">
        <id>Q6A162</id>
    </interactant>
    <interactant intactId="EBI-16429099">
        <id>A0A0S2Z5S9</id>
        <label>LHX4</label>
    </interactant>
    <organismsDiffer>false</organismsDiffer>
    <experiments>3</experiments>
</comment>
<comment type="interaction">
    <interactant intactId="EBI-10171697">
        <id>Q6A162</id>
    </interactant>
    <interactant intactId="EBI-10257651">
        <id>Q7Z4I7-5</id>
        <label>LIMS2</label>
    </interactant>
    <organismsDiffer>false</organismsDiffer>
    <experiments>3</experiments>
</comment>
<comment type="interaction">
    <interactant intactId="EBI-10171697">
        <id>Q6A162</id>
    </interactant>
    <interactant intactId="EBI-748884">
        <id>Q96GY3</id>
        <label>LIN37</label>
    </interactant>
    <organismsDiffer>false</organismsDiffer>
    <experiments>3</experiments>
</comment>
<comment type="interaction">
    <interactant intactId="EBI-10171697">
        <id>Q6A162</id>
    </interactant>
    <interactant intactId="EBI-10298556">
        <id>Q9BU23</id>
        <label>LMF2</label>
    </interactant>
    <organismsDiffer>false</organismsDiffer>
    <experiments>3</experiments>
</comment>
<comment type="interaction">
    <interactant intactId="EBI-10171697">
        <id>Q6A162</id>
    </interactant>
    <interactant intactId="EBI-8639312">
        <id>P25800</id>
        <label>LMO1</label>
    </interactant>
    <organismsDiffer>false</organismsDiffer>
    <experiments>3</experiments>
</comment>
<comment type="interaction">
    <interactant intactId="EBI-10171697">
        <id>Q6A162</id>
    </interactant>
    <interactant intactId="EBI-739696">
        <id>P25791</id>
        <label>LMO2</label>
    </interactant>
    <organismsDiffer>false</organismsDiffer>
    <experiments>3</experiments>
</comment>
<comment type="interaction">
    <interactant intactId="EBI-10171697">
        <id>Q6A162</id>
    </interactant>
    <interactant intactId="EBI-2798728">
        <id>P61968</id>
        <label>LMO4</label>
    </interactant>
    <organismsDiffer>false</organismsDiffer>
    <experiments>3</experiments>
</comment>
<comment type="interaction">
    <interactant intactId="EBI-10171697">
        <id>Q6A162</id>
    </interactant>
    <interactant intactId="EBI-718707">
        <id>O75427</id>
        <label>LRCH4</label>
    </interactant>
    <organismsDiffer>false</organismsDiffer>
    <experiments>3</experiments>
</comment>
<comment type="interaction">
    <interactant intactId="EBI-10171697">
        <id>Q6A162</id>
    </interactant>
    <interactant intactId="EBI-6659161">
        <id>Q9Y586</id>
        <label>MAB21L2</label>
    </interactant>
    <organismsDiffer>false</organismsDiffer>
    <experiments>3</experiments>
</comment>
<comment type="interaction">
    <interactant intactId="EBI-10171697">
        <id>Q6A162</id>
    </interactant>
    <interactant intactId="EBI-746778">
        <id>Q96A72</id>
        <label>MAGOHB</label>
    </interactant>
    <organismsDiffer>false</organismsDiffer>
    <experiments>3</experiments>
</comment>
<comment type="interaction">
    <interactant intactId="EBI-10171697">
        <id>Q6A162</id>
    </interactant>
    <interactant intactId="EBI-947402">
        <id>O60336</id>
        <label>MAPKBP1</label>
    </interactant>
    <organismsDiffer>false</organismsDiffer>
    <experiments>3</experiments>
</comment>
<comment type="interaction">
    <interactant intactId="EBI-10171697">
        <id>Q6A162</id>
    </interactant>
    <interactant intactId="EBI-10250211">
        <id>Q6IPE9</id>
        <label>MARK4</label>
    </interactant>
    <organismsDiffer>false</organismsDiffer>
    <experiments>3</experiments>
</comment>
<comment type="interaction">
    <interactant intactId="EBI-10171697">
        <id>Q6A162</id>
    </interactant>
    <interactant intactId="EBI-10286267">
        <id>Q96G25-2</id>
        <label>MED8</label>
    </interactant>
    <organismsDiffer>false</organismsDiffer>
    <experiments>3</experiments>
</comment>
<comment type="interaction">
    <interactant intactId="EBI-10171697">
        <id>Q6A162</id>
    </interactant>
    <interactant intactId="EBI-749353">
        <id>Q9H7H0</id>
        <label>METTL17</label>
    </interactant>
    <organismsDiffer>false</organismsDiffer>
    <experiments>4</experiments>
</comment>
<comment type="interaction">
    <interactant intactId="EBI-10171697">
        <id>Q6A162</id>
    </interactant>
    <interactant intactId="EBI-11098807">
        <id>Q9H7H0-2</id>
        <label>METTL17</label>
    </interactant>
    <organismsDiffer>false</organismsDiffer>
    <experiments>3</experiments>
</comment>
<comment type="interaction">
    <interactant intactId="EBI-10171697">
        <id>Q6A162</id>
    </interactant>
    <interactant intactId="EBI-1048159">
        <id>P55081</id>
        <label>MFAP1</label>
    </interactant>
    <organismsDiffer>false</organismsDiffer>
    <experiments>3</experiments>
</comment>
<comment type="interaction">
    <interactant intactId="EBI-10171697">
        <id>Q6A162</id>
    </interactant>
    <interactant intactId="EBI-10241963">
        <id>Q4ZG74</id>
        <label>MGC13033</label>
    </interactant>
    <organismsDiffer>false</organismsDiffer>
    <experiments>3</experiments>
</comment>
<comment type="interaction">
    <interactant intactId="EBI-10171697">
        <id>Q6A162</id>
    </interactant>
    <interactant intactId="EBI-10172526">
        <id>Q9UJV3-2</id>
        <label>MID2</label>
    </interactant>
    <organismsDiffer>false</organismsDiffer>
    <experiments>3</experiments>
</comment>
<comment type="interaction">
    <interactant intactId="EBI-10171697">
        <id>Q6A162</id>
    </interactant>
    <interactant intactId="EBI-9679267">
        <id>Q70IA8</id>
        <label>MOB3C</label>
    </interactant>
    <organismsDiffer>false</organismsDiffer>
    <experiments>3</experiments>
</comment>
<comment type="interaction">
    <interactant intactId="EBI-10171697">
        <id>Q6A162</id>
    </interactant>
    <interactant intactId="EBI-10230628">
        <id>Q13875</id>
        <label>MOBP</label>
    </interactant>
    <organismsDiffer>false</organismsDiffer>
    <experiments>3</experiments>
</comment>
<comment type="interaction">
    <interactant intactId="EBI-10171697">
        <id>Q6A162</id>
    </interactant>
    <interactant intactId="EBI-1757866">
        <id>P00540</id>
        <label>MOS</label>
    </interactant>
    <organismsDiffer>false</organismsDiffer>
    <experiments>3</experiments>
</comment>
<comment type="interaction">
    <interactant intactId="EBI-10171697">
        <id>Q6A162</id>
    </interactant>
    <interactant intactId="EBI-5453723">
        <id>Q9Y3B7</id>
        <label>MRPL11</label>
    </interactant>
    <organismsDiffer>false</organismsDiffer>
    <experiments>3</experiments>
</comment>
<comment type="interaction">
    <interactant intactId="EBI-10171697">
        <id>Q6A162</id>
    </interactant>
    <interactant intactId="EBI-2855755">
        <id>Q96E11</id>
        <label>MRRF</label>
    </interactant>
    <organismsDiffer>false</organismsDiffer>
    <experiments>3</experiments>
</comment>
<comment type="interaction">
    <interactant intactId="EBI-10171697">
        <id>Q6A162</id>
    </interactant>
    <interactant intactId="EBI-10699187">
        <id>Q8IXL7-2</id>
        <label>MSRB3</label>
    </interactant>
    <organismsDiffer>false</organismsDiffer>
    <experiments>3</experiments>
</comment>
<comment type="interaction">
    <interactant intactId="EBI-10171697">
        <id>Q6A162</id>
    </interactant>
    <interactant intactId="EBI-714236">
        <id>Q13330</id>
        <label>MTA1</label>
    </interactant>
    <organismsDiffer>false</organismsDiffer>
    <experiments>4</experiments>
</comment>
<comment type="interaction">
    <interactant intactId="EBI-10171697">
        <id>Q6A162</id>
    </interactant>
    <interactant intactId="EBI-10211940">
        <id>P50539-3</id>
        <label>MXI1</label>
    </interactant>
    <organismsDiffer>false</organismsDiffer>
    <experiments>3</experiments>
</comment>
<comment type="interaction">
    <interactant intactId="EBI-10171697">
        <id>Q6A162</id>
    </interactant>
    <interactant intactId="EBI-16436111">
        <id>P50539-4</id>
        <label>MXI1</label>
    </interactant>
    <organismsDiffer>false</organismsDiffer>
    <experiments>3</experiments>
</comment>
<comment type="interaction">
    <interactant intactId="EBI-10171697">
        <id>Q6A162</id>
    </interactant>
    <interactant intactId="EBI-2858213">
        <id>Q86VE0</id>
        <label>MYPOP</label>
    </interactant>
    <organismsDiffer>false</organismsDiffer>
    <experiments>3</experiments>
</comment>
<comment type="interaction">
    <interactant intactId="EBI-10171697">
        <id>Q6A162</id>
    </interactant>
    <interactant intactId="EBI-10254820">
        <id>Q6XQN6-2</id>
        <label>NAPRT</label>
    </interactant>
    <organismsDiffer>false</organismsDiffer>
    <experiments>3</experiments>
</comment>
<comment type="interaction">
    <interactant intactId="EBI-10171697">
        <id>Q6A162</id>
    </interactant>
    <interactant intactId="EBI-928842">
        <id>Q9GZM8</id>
        <label>NDEL1</label>
    </interactant>
    <organismsDiffer>false</organismsDiffer>
    <experiments>5</experiments>
</comment>
<comment type="interaction">
    <interactant intactId="EBI-10171697">
        <id>Q6A162</id>
    </interactant>
    <interactant intactId="EBI-740364">
        <id>Q9HC98</id>
        <label>NEK6</label>
    </interactant>
    <organismsDiffer>false</organismsDiffer>
    <experiments>3</experiments>
</comment>
<comment type="interaction">
    <interactant intactId="EBI-10171697">
        <id>Q6A162</id>
    </interactant>
    <interactant intactId="EBI-11750983">
        <id>Q9HC98-4</id>
        <label>NEK6</label>
    </interactant>
    <organismsDiffer>false</organismsDiffer>
    <experiments>3</experiments>
</comment>
<comment type="interaction">
    <interactant intactId="EBI-10171697">
        <id>Q6A162</id>
    </interactant>
    <interactant intactId="EBI-10271199">
        <id>Q8NI38</id>
        <label>NFKBID</label>
    </interactant>
    <organismsDiffer>false</organismsDiffer>
    <experiments>3</experiments>
</comment>
<comment type="interaction">
    <interactant intactId="EBI-10171697">
        <id>Q6A162</id>
    </interactant>
    <interactant intactId="EBI-2802124">
        <id>Q92982</id>
        <label>NINJ1</label>
    </interactant>
    <organismsDiffer>false</organismsDiffer>
    <experiments>3</experiments>
</comment>
<comment type="interaction">
    <interactant intactId="EBI-10171697">
        <id>Q6A162</id>
    </interactant>
    <interactant intactId="EBI-10210114">
        <id>P48146</id>
        <label>NPBWR2</label>
    </interactant>
    <organismsDiffer>false</organismsDiffer>
    <experiments>3</experiments>
</comment>
<comment type="interaction">
    <interactant intactId="EBI-10171697">
        <id>Q6A162</id>
    </interactant>
    <interactant intactId="EBI-747044">
        <id>P16860</id>
        <label>NPPB</label>
    </interactant>
    <organismsDiffer>false</organismsDiffer>
    <experiments>3</experiments>
</comment>
<comment type="interaction">
    <interactant intactId="EBI-10171697">
        <id>Q6A162</id>
    </interactant>
    <interactant intactId="EBI-10250949">
        <id>Q6NSM0</id>
        <label>NR1D2</label>
    </interactant>
    <organismsDiffer>false</organismsDiffer>
    <experiments>3</experiments>
</comment>
<comment type="interaction">
    <interactant intactId="EBI-10171697">
        <id>Q6A162</id>
    </interactant>
    <interactant intactId="EBI-398874">
        <id>Q9UBU9</id>
        <label>NXF1</label>
    </interactant>
    <organismsDiffer>false</organismsDiffer>
    <experiments>3</experiments>
</comment>
<comment type="interaction">
    <interactant intactId="EBI-10171697">
        <id>Q6A162</id>
    </interactant>
    <interactant intactId="EBI-1046387">
        <id>Q96NG3</id>
        <label>ODAD4</label>
    </interactant>
    <organismsDiffer>false</organismsDiffer>
    <experiments>3</experiments>
</comment>
<comment type="interaction">
    <interactant intactId="EBI-10171697">
        <id>Q6A162</id>
    </interactant>
    <interactant intactId="EBI-536879">
        <id>O43482</id>
        <label>OIP5</label>
    </interactant>
    <organismsDiffer>false</organismsDiffer>
    <experiments>3</experiments>
</comment>
<comment type="interaction">
    <interactant intactId="EBI-10171697">
        <id>Q6A162</id>
    </interactant>
    <interactant intactId="EBI-10174172">
        <id>A8K0Y0</id>
        <label>OPCML</label>
    </interactant>
    <organismsDiffer>false</organismsDiffer>
    <experiments>3</experiments>
</comment>
<comment type="interaction">
    <interactant intactId="EBI-10171697">
        <id>Q6A162</id>
    </interactant>
    <interactant intactId="EBI-10300896">
        <id>Q9BWI9</id>
        <label>OTUB2</label>
    </interactant>
    <organismsDiffer>false</organismsDiffer>
    <experiments>3</experiments>
</comment>
<comment type="interaction">
    <interactant intactId="EBI-10171697">
        <id>Q6A162</id>
    </interactant>
    <interactant intactId="EBI-751267">
        <id>Q96HC4</id>
        <label>PDLIM5</label>
    </interactant>
    <organismsDiffer>false</organismsDiffer>
    <experiments>3</experiments>
</comment>
<comment type="interaction">
    <interactant intactId="EBI-10171697">
        <id>Q6A162</id>
    </interactant>
    <interactant intactId="EBI-530034">
        <id>O43189</id>
        <label>PHF1</label>
    </interactant>
    <organismsDiffer>false</organismsDiffer>
    <experiments>3</experiments>
</comment>
<comment type="interaction">
    <interactant intactId="EBI-10171697">
        <id>Q6A162</id>
    </interactant>
    <interactant intactId="EBI-745085">
        <id>Q96BD5</id>
        <label>PHF21A</label>
    </interactant>
    <organismsDiffer>false</organismsDiffer>
    <experiments>3</experiments>
</comment>
<comment type="interaction">
    <interactant intactId="EBI-10171697">
        <id>Q6A162</id>
    </interactant>
    <interactant intactId="EBI-14084211">
        <id>A2BDE7</id>
        <label>PHLDA1</label>
    </interactant>
    <organismsDiffer>false</organismsDiffer>
    <experiments>3</experiments>
</comment>
<comment type="interaction">
    <interactant intactId="EBI-10171697">
        <id>Q6A162</id>
    </interactant>
    <interactant intactId="EBI-2908273">
        <id>Q96S52</id>
        <label>PIGS</label>
    </interactant>
    <organismsDiffer>false</organismsDiffer>
    <experiments>3</experiments>
</comment>
<comment type="interaction">
    <interactant intactId="EBI-10171697">
        <id>Q6A162</id>
    </interactant>
    <interactant intactId="EBI-2568609">
        <id>Q9BSJ6</id>
        <label>PIMREG</label>
    </interactant>
    <organismsDiffer>false</organismsDiffer>
    <experiments>6</experiments>
</comment>
<comment type="interaction">
    <interactant intactId="EBI-10171697">
        <id>Q6A162</id>
    </interactant>
    <interactant intactId="EBI-714158">
        <id>Q13526</id>
        <label>PIN1</label>
    </interactant>
    <organismsDiffer>false</organismsDiffer>
    <experiments>3</experiments>
</comment>
<comment type="interaction">
    <interactant intactId="EBI-10171697">
        <id>Q6A162</id>
    </interactant>
    <interactant intactId="EBI-7813714">
        <id>Q13563</id>
        <label>PKD2</label>
    </interactant>
    <organismsDiffer>false</organismsDiffer>
    <experiments>3</experiments>
</comment>
<comment type="interaction">
    <interactant intactId="EBI-10171697">
        <id>Q6A162</id>
    </interactant>
    <interactant intactId="EBI-10276663">
        <id>Q8WUT1</id>
        <label>POLDIP3</label>
    </interactant>
    <organismsDiffer>false</organismsDiffer>
    <experiments>3</experiments>
</comment>
<comment type="interaction">
    <interactant intactId="EBI-10171697">
        <id>Q6A162</id>
    </interactant>
    <interactant intactId="EBI-10320765">
        <id>Q9UGP5-2</id>
        <label>POLL</label>
    </interactant>
    <organismsDiffer>false</organismsDiffer>
    <experiments>3</experiments>
</comment>
<comment type="interaction">
    <interactant intactId="EBI-10171697">
        <id>Q6A162</id>
    </interactant>
    <interactant intactId="EBI-366525">
        <id>Q969H6</id>
        <label>POP5</label>
    </interactant>
    <organismsDiffer>false</organismsDiffer>
    <experiments>3</experiments>
</comment>
<comment type="interaction">
    <interactant intactId="EBI-10171697">
        <id>Q6A162</id>
    </interactant>
    <interactant intactId="EBI-2557469">
        <id>Q6NYC8</id>
        <label>PPP1R18</label>
    </interactant>
    <organismsDiffer>false</organismsDiffer>
    <experiments>3</experiments>
</comment>
<comment type="interaction">
    <interactant intactId="EBI-10171697">
        <id>Q6A162</id>
    </interactant>
    <interactant intactId="EBI-2860740">
        <id>Q96QH2</id>
        <label>PRAM1</label>
    </interactant>
    <organismsDiffer>false</organismsDiffer>
    <experiments>3</experiments>
</comment>
<comment type="interaction">
    <interactant intactId="EBI-10171697">
        <id>Q6A162</id>
    </interactant>
    <interactant intactId="EBI-1181405">
        <id>Q13131</id>
        <label>PRKAA1</label>
    </interactant>
    <organismsDiffer>false</organismsDiffer>
    <experiments>3</experiments>
</comment>
<comment type="interaction">
    <interactant intactId="EBI-10171697">
        <id>Q6A162</id>
    </interactant>
    <interactant intactId="EBI-1053424">
        <id>O43741</id>
        <label>PRKAB2</label>
    </interactant>
    <organismsDiffer>false</organismsDiffer>
    <experiments>6</experiments>
</comment>
<comment type="interaction">
    <interactant intactId="EBI-10171697">
        <id>Q6A162</id>
    </interactant>
    <interactant intactId="EBI-2798416">
        <id>Q99633</id>
        <label>PRPF18</label>
    </interactant>
    <organismsDiffer>false</organismsDiffer>
    <experiments>3</experiments>
</comment>
<comment type="interaction">
    <interactant intactId="EBI-10171697">
        <id>Q6A162</id>
    </interactant>
    <interactant intactId="EBI-1567797">
        <id>Q8WWY3</id>
        <label>PRPF31</label>
    </interactant>
    <organismsDiffer>false</organismsDiffer>
    <experiments>6</experiments>
</comment>
<comment type="interaction">
    <interactant intactId="EBI-10171697">
        <id>Q6A162</id>
    </interactant>
    <interactant intactId="EBI-359352">
        <id>P25786</id>
        <label>PSMA1</label>
    </interactant>
    <organismsDiffer>false</organismsDiffer>
    <experiments>3</experiments>
</comment>
<comment type="interaction">
    <interactant intactId="EBI-10171697">
        <id>Q6A162</id>
    </interactant>
    <interactant intactId="EBI-372273">
        <id>P20618</id>
        <label>PSMB1</label>
    </interactant>
    <organismsDiffer>false</organismsDiffer>
    <experiments>3</experiments>
</comment>
<comment type="interaction">
    <interactant intactId="EBI-10171697">
        <id>Q6A162</id>
    </interactant>
    <interactant intactId="EBI-357745">
        <id>P62195</id>
        <label>PSMC5</label>
    </interactant>
    <organismsDiffer>false</organismsDiffer>
    <experiments>5</experiments>
</comment>
<comment type="interaction">
    <interactant intactId="EBI-10171697">
        <id>Q6A162</id>
    </interactant>
    <interactant intactId="EBI-10234038">
        <id>P43115-12</id>
        <label>PTGER3</label>
    </interactant>
    <organismsDiffer>false</organismsDiffer>
    <experiments>3</experiments>
</comment>
<comment type="interaction">
    <interactant intactId="EBI-10171697">
        <id>Q6A162</id>
    </interactant>
    <interactant intactId="EBI-7199479">
        <id>Q8WUK0</id>
        <label>PTPMT1</label>
    </interactant>
    <organismsDiffer>false</organismsDiffer>
    <experiments>3</experiments>
</comment>
<comment type="interaction">
    <interactant intactId="EBI-10171697">
        <id>Q6A162</id>
    </interactant>
    <interactant intactId="EBI-743796">
        <id>Q8TBN0</id>
        <label>RAB3IL1</label>
    </interactant>
    <organismsDiffer>false</organismsDiffer>
    <experiments>3</experiments>
</comment>
<comment type="interaction">
    <interactant intactId="EBI-10171697">
        <id>Q6A162</id>
    </interactant>
    <interactant intactId="EBI-747844">
        <id>Q96QF0</id>
        <label>RAB3IP</label>
    </interactant>
    <organismsDiffer>false</organismsDiffer>
    <experiments>3</experiments>
</comment>
<comment type="interaction">
    <interactant intactId="EBI-10171697">
        <id>Q6A162</id>
    </interactant>
    <interactant intactId="EBI-413628">
        <id>P63000</id>
        <label>RAC1</label>
    </interactant>
    <organismsDiffer>false</organismsDiffer>
    <experiments>3</experiments>
</comment>
<comment type="interaction">
    <interactant intactId="EBI-10171697">
        <id>Q6A162</id>
    </interactant>
    <interactant intactId="EBI-367390">
        <id>Q8WWW0</id>
        <label>RASSF5</label>
    </interactant>
    <organismsDiffer>false</organismsDiffer>
    <experiments>3</experiments>
</comment>
<comment type="interaction">
    <interactant intactId="EBI-10171697">
        <id>Q6A162</id>
    </interactant>
    <interactant intactId="EBI-740773">
        <id>Q96IZ5</id>
        <label>RBM41</label>
    </interactant>
    <organismsDiffer>false</organismsDiffer>
    <experiments>3</experiments>
</comment>
<comment type="interaction">
    <interactant intactId="EBI-10171697">
        <id>Q6A162</id>
    </interactant>
    <interactant intactId="EBI-743428">
        <id>Q9P2K3</id>
        <label>RCOR3</label>
    </interactant>
    <organismsDiffer>false</organismsDiffer>
    <experiments>3</experiments>
</comment>
<comment type="interaction">
    <interactant intactId="EBI-10171697">
        <id>Q6A162</id>
    </interactant>
    <interactant intactId="EBI-10253121">
        <id>Q6P9E2</id>
        <label>RECK</label>
    </interactant>
    <organismsDiffer>false</organismsDiffer>
    <experiments>3</experiments>
</comment>
<comment type="interaction">
    <interactant intactId="EBI-10171697">
        <id>Q6A162</id>
    </interactant>
    <interactant intactId="EBI-12058229">
        <id>P57771-2</id>
        <label>RGS8</label>
    </interactant>
    <organismsDiffer>false</organismsDiffer>
    <experiments>3</experiments>
</comment>
<comment type="interaction">
    <interactant intactId="EBI-10171697">
        <id>Q6A162</id>
    </interactant>
    <interactant intactId="EBI-10248548">
        <id>Q63HN8-6</id>
        <label>RNF213</label>
    </interactant>
    <organismsDiffer>false</organismsDiffer>
    <experiments>3</experiments>
</comment>
<comment type="interaction">
    <interactant intactId="EBI-10171697">
        <id>Q6A162</id>
    </interactant>
    <interactant intactId="EBI-16428950">
        <id>A0A0S2Z4G9</id>
        <label>RNF6</label>
    </interactant>
    <organismsDiffer>false</organismsDiffer>
    <experiments>3</experiments>
</comment>
<comment type="interaction">
    <interactant intactId="EBI-10171697">
        <id>Q6A162</id>
    </interactant>
    <interactant intactId="EBI-354380">
        <id>P62913</id>
        <label>RPL11</label>
    </interactant>
    <organismsDiffer>false</organismsDiffer>
    <experiments>3</experiments>
</comment>
<comment type="interaction">
    <interactant intactId="EBI-10171697">
        <id>Q6A162</id>
    </interactant>
    <interactant intactId="EBI-748350">
        <id>Q9UHP6</id>
        <label>RSPH14</label>
    </interactant>
    <organismsDiffer>false</organismsDiffer>
    <experiments>3</experiments>
</comment>
<comment type="interaction">
    <interactant intactId="EBI-10171697">
        <id>Q6A162</id>
    </interactant>
    <interactant intactId="EBI-10217913">
        <id>Q14D33</id>
        <label>RTP5</label>
    </interactant>
    <organismsDiffer>false</organismsDiffer>
    <experiments>3</experiments>
</comment>
<comment type="interaction">
    <interactant intactId="EBI-10171697">
        <id>Q6A162</id>
    </interactant>
    <interactant intactId="EBI-724442">
        <id>P57060</id>
        <label>RWDD2B</label>
    </interactant>
    <organismsDiffer>false</organismsDiffer>
    <experiments>6</experiments>
</comment>
<comment type="interaction">
    <interactant intactId="EBI-10171697">
        <id>Q6A162</id>
    </interactant>
    <interactant intactId="EBI-16436147">
        <id>A0A0S2Z4M5</id>
        <label>RXRB</label>
    </interactant>
    <organismsDiffer>false</organismsDiffer>
    <experiments>3</experiments>
</comment>
<comment type="interaction">
    <interactant intactId="EBI-10171697">
        <id>Q6A162</id>
    </interactant>
    <interactant intactId="EBI-16429492">
        <id>P28702-3</id>
        <label>RXRB</label>
    </interactant>
    <organismsDiffer>false</organismsDiffer>
    <experiments>3</experiments>
</comment>
<comment type="interaction">
    <interactant intactId="EBI-10171697">
        <id>Q6A162</id>
    </interactant>
    <interactant intactId="EBI-745846">
        <id>P57086</id>
        <label>SCAND1</label>
    </interactant>
    <organismsDiffer>false</organismsDiffer>
    <experiments>3</experiments>
</comment>
<comment type="interaction">
    <interactant intactId="EBI-10171697">
        <id>Q6A162</id>
    </interactant>
    <interactant intactId="EBI-2686537">
        <id>Q9UIL1</id>
        <label>SCOC</label>
    </interactant>
    <organismsDiffer>false</organismsDiffer>
    <experiments>3</experiments>
</comment>
<comment type="interaction">
    <interactant intactId="EBI-10171697">
        <id>Q6A162</id>
    </interactant>
    <interactant intactId="EBI-10303490">
        <id>Q9C0C4</id>
        <label>SEMA4C</label>
    </interactant>
    <organismsDiffer>false</organismsDiffer>
    <experiments>3</experiments>
</comment>
<comment type="interaction">
    <interactant intactId="EBI-10171697">
        <id>Q6A162</id>
    </interactant>
    <interactant intactId="EBI-10303449">
        <id>Q9C0A6-2</id>
        <label>SETD5</label>
    </interactant>
    <organismsDiffer>false</organismsDiffer>
    <experiments>3</experiments>
</comment>
<comment type="interaction">
    <interactant intactId="EBI-10171697">
        <id>Q6A162</id>
    </interactant>
    <interactant intactId="EBI-10251550">
        <id>Q6NXQ0</id>
        <label>SFRS2</label>
    </interactant>
    <organismsDiffer>false</organismsDiffer>
    <experiments>3</experiments>
</comment>
<comment type="interaction">
    <interactant intactId="EBI-10171697">
        <id>Q6A162</id>
    </interactant>
    <interactant intactId="EBI-747035">
        <id>Q9H788</id>
        <label>SH2D4A</label>
    </interactant>
    <organismsDiffer>false</organismsDiffer>
    <experiments>6</experiments>
</comment>
<comment type="interaction">
    <interactant intactId="EBI-10171697">
        <id>Q6A162</id>
    </interactant>
    <interactant intactId="EBI-79084">
        <id>Q92529</id>
        <label>SHC3</label>
    </interactant>
    <organismsDiffer>false</organismsDiffer>
    <experiments>6</experiments>
</comment>
<comment type="interaction">
    <interactant intactId="EBI-10171697">
        <id>Q6A162</id>
    </interactant>
    <interactant intactId="EBI-10313866">
        <id>Q9NUL5</id>
        <label>SHFL</label>
    </interactant>
    <organismsDiffer>false</organismsDiffer>
    <experiments>3</experiments>
</comment>
<comment type="interaction">
    <interactant intactId="EBI-10171697">
        <id>Q6A162</id>
    </interactant>
    <interactant intactId="EBI-11955083">
        <id>Q9NUL5-4</id>
        <label>SHFL</label>
    </interactant>
    <organismsDiffer>false</organismsDiffer>
    <experiments>3</experiments>
</comment>
<comment type="interaction">
    <interactant intactId="EBI-10171697">
        <id>Q6A162</id>
    </interactant>
    <interactant intactId="EBI-11998660">
        <id>Q9UHI7-3</id>
        <label>SLC23A1</label>
    </interactant>
    <organismsDiffer>false</organismsDiffer>
    <experiments>3</experiments>
</comment>
<comment type="interaction">
    <interactant intactId="EBI-10171697">
        <id>Q6A162</id>
    </interactant>
    <interactant intactId="EBI-750394">
        <id>Q9UBX3</id>
        <label>SLC25A10</label>
    </interactant>
    <organismsDiffer>false</organismsDiffer>
    <experiments>3</experiments>
</comment>
<comment type="interaction">
    <interactant intactId="EBI-10171697">
        <id>Q6A162</id>
    </interactant>
    <interactant intactId="EBI-1050793">
        <id>Q9GZT3</id>
        <label>SLIRP</label>
    </interactant>
    <organismsDiffer>false</organismsDiffer>
    <experiments>3</experiments>
</comment>
<comment type="interaction">
    <interactant intactId="EBI-10171697">
        <id>Q6A162</id>
    </interactant>
    <interactant intactId="EBI-750559">
        <id>O95391</id>
        <label>SLU7</label>
    </interactant>
    <organismsDiffer>false</organismsDiffer>
    <experiments>3</experiments>
</comment>
<comment type="interaction">
    <interactant intactId="EBI-10171697">
        <id>Q6A162</id>
    </interactant>
    <interactant intactId="EBI-455078">
        <id>Q969G3</id>
        <label>SMARCE1</label>
    </interactant>
    <organismsDiffer>false</organismsDiffer>
    <experiments>6</experiments>
</comment>
<comment type="interaction">
    <interactant intactId="EBI-10171697">
        <id>Q6A162</id>
    </interactant>
    <interactant intactId="EBI-8640191">
        <id>Q9NRQ5</id>
        <label>SMCO4</label>
    </interactant>
    <organismsDiffer>false</organismsDiffer>
    <experiments>3</experiments>
</comment>
<comment type="interaction">
    <interactant intactId="EBI-10171697">
        <id>Q6A162</id>
    </interactant>
    <interactant intactId="EBI-1045459">
        <id>O95863</id>
        <label>SNAI1</label>
    </interactant>
    <organismsDiffer>false</organismsDiffer>
    <experiments>4</experiments>
</comment>
<comment type="interaction">
    <interactant intactId="EBI-10171697">
        <id>Q6A162</id>
    </interactant>
    <interactant intactId="EBI-372475">
        <id>P14678-2</id>
        <label>SNRPB</label>
    </interactant>
    <organismsDiffer>false</organismsDiffer>
    <experiments>3</experiments>
</comment>
<comment type="interaction">
    <interactant intactId="EBI-10171697">
        <id>Q6A162</id>
    </interactant>
    <interactant intactId="EBI-632715">
        <id>Q13573</id>
        <label>SNW1</label>
    </interactant>
    <organismsDiffer>false</organismsDiffer>
    <experiments>3</experiments>
</comment>
<comment type="interaction">
    <interactant intactId="EBI-10171697">
        <id>Q6A162</id>
    </interactant>
    <interactant intactId="EBI-11995806">
        <id>Q9H0A9-2</id>
        <label>SPATC1L</label>
    </interactant>
    <organismsDiffer>false</organismsDiffer>
    <experiments>3</experiments>
</comment>
<comment type="interaction">
    <interactant intactId="EBI-10171697">
        <id>Q6A162</id>
    </interactant>
    <interactant intactId="EBI-740053">
        <id>Q9Y4P9</id>
        <label>SPEF1</label>
    </interactant>
    <organismsDiffer>false</organismsDiffer>
    <experiments>3</experiments>
</comment>
<comment type="interaction">
    <interactant intactId="EBI-10171697">
        <id>Q6A162</id>
    </interactant>
    <interactant intactId="EBI-717201">
        <id>Q9UQ90</id>
        <label>SPG7</label>
    </interactant>
    <organismsDiffer>false</organismsDiffer>
    <experiments>3</experiments>
</comment>
<comment type="interaction">
    <interactant intactId="EBI-10171697">
        <id>Q6A162</id>
    </interactant>
    <interactant intactId="EBI-12020542">
        <id>Q96LM5</id>
        <label>SPMIP2</label>
    </interactant>
    <organismsDiffer>false</organismsDiffer>
    <experiments>3</experiments>
</comment>
<comment type="interaction">
    <interactant intactId="EBI-10171697">
        <id>Q6A162</id>
    </interactant>
    <interactant intactId="EBI-2210673">
        <id>Q16385</id>
        <label>SSX2B</label>
    </interactant>
    <organismsDiffer>false</organismsDiffer>
    <experiments>3</experiments>
</comment>
<comment type="interaction">
    <interactant intactId="EBI-10171697">
        <id>Q6A162</id>
    </interactant>
    <interactant intactId="EBI-2212028">
        <id>Q9Y2D8</id>
        <label>SSX2IP</label>
    </interactant>
    <organismsDiffer>false</organismsDiffer>
    <experiments>3</experiments>
</comment>
<comment type="interaction">
    <interactant intactId="EBI-10171697">
        <id>Q6A162</id>
    </interactant>
    <interactant intactId="EBI-3921347">
        <id>P51687</id>
        <label>SUOX</label>
    </interactant>
    <organismsDiffer>false</organismsDiffer>
    <experiments>3</experiments>
</comment>
<comment type="interaction">
    <interactant intactId="EBI-10171697">
        <id>Q6A162</id>
    </interactant>
    <interactant intactId="EBI-10246152">
        <id>Q5T7P8-2</id>
        <label>SYT6</label>
    </interactant>
    <organismsDiffer>false</organismsDiffer>
    <experiments>3</experiments>
</comment>
<comment type="interaction">
    <interactant intactId="EBI-10171697">
        <id>Q6A162</id>
    </interactant>
    <interactant intactId="EBI-747797">
        <id>Q9BSH4</id>
        <label>TACO1</label>
    </interactant>
    <organismsDiffer>false</organismsDiffer>
    <experiments>3</experiments>
</comment>
<comment type="interaction">
    <interactant intactId="EBI-10171697">
        <id>Q6A162</id>
    </interactant>
    <interactant intactId="EBI-12018146">
        <id>Q8IYX1</id>
        <label>TBC1D21</label>
    </interactant>
    <organismsDiffer>false</organismsDiffer>
    <experiments>3</experiments>
</comment>
<comment type="interaction">
    <interactant intactId="EBI-10171697">
        <id>Q6A162</id>
    </interactant>
    <interactant intactId="EBI-8787464">
        <id>Q9NU19</id>
        <label>TBC1D22B</label>
    </interactant>
    <organismsDiffer>false</organismsDiffer>
    <experiments>4</experiments>
</comment>
<comment type="interaction">
    <interactant intactId="EBI-10171697">
        <id>Q6A162</id>
    </interactant>
    <interactant intactId="EBI-710310">
        <id>Q15560</id>
        <label>TCEA2</label>
    </interactant>
    <organismsDiffer>false</organismsDiffer>
    <experiments>3</experiments>
</comment>
<comment type="interaction">
    <interactant intactId="EBI-10171697">
        <id>Q6A162</id>
    </interactant>
    <interactant intactId="EBI-11955057">
        <id>Q8N8B7-2</id>
        <label>TCEANC</label>
    </interactant>
    <organismsDiffer>false</organismsDiffer>
    <experiments>3</experiments>
</comment>
<comment type="interaction">
    <interactant intactId="EBI-10171697">
        <id>Q6A162</id>
    </interactant>
    <interactant intactId="EBI-740781">
        <id>Q9BT92</id>
        <label>TCHP</label>
    </interactant>
    <organismsDiffer>false</organismsDiffer>
    <experiments>3</experiments>
</comment>
<comment type="interaction">
    <interactant intactId="EBI-10171697">
        <id>Q6A162</id>
    </interactant>
    <interactant intactId="EBI-16429215">
        <id>A0A0S2Z4F2</id>
        <label>TEAD4</label>
    </interactant>
    <organismsDiffer>false</organismsDiffer>
    <experiments>3</experiments>
</comment>
<comment type="interaction">
    <interactant intactId="EBI-10171697">
        <id>Q6A162</id>
    </interactant>
    <interactant intactId="EBI-747736">
        <id>Q15561</id>
        <label>TEAD4</label>
    </interactant>
    <organismsDiffer>false</organismsDiffer>
    <experiments>6</experiments>
</comment>
<comment type="interaction">
    <interactant intactId="EBI-10171697">
        <id>Q6A162</id>
    </interactant>
    <interactant intactId="EBI-741350">
        <id>Q9BT49</id>
        <label>THAP7</label>
    </interactant>
    <organismsDiffer>false</organismsDiffer>
    <experiments>3</experiments>
</comment>
<comment type="interaction">
    <interactant intactId="EBI-10171697">
        <id>Q6A162</id>
    </interactant>
    <interactant intactId="EBI-2256865">
        <id>P35590</id>
        <label>TIE1</label>
    </interactant>
    <organismsDiffer>false</organismsDiffer>
    <experiments>3</experiments>
</comment>
<comment type="interaction">
    <interactant intactId="EBI-10171697">
        <id>Q6A162</id>
    </interactant>
    <interactant intactId="EBI-717810">
        <id>Q08117</id>
        <label>TLE5</label>
    </interactant>
    <organismsDiffer>false</organismsDiffer>
    <experiments>3</experiments>
</comment>
<comment type="interaction">
    <interactant intactId="EBI-10171697">
        <id>Q6A162</id>
    </interactant>
    <interactant intactId="EBI-11741437">
        <id>Q08117-2</id>
        <label>TLE5</label>
    </interactant>
    <organismsDiffer>false</organismsDiffer>
    <experiments>3</experiments>
</comment>
<comment type="interaction">
    <interactant intactId="EBI-10171697">
        <id>Q6A162</id>
    </interactant>
    <interactant intactId="EBI-10307654">
        <id>Q9H6L2</id>
        <label>TMEM231</label>
    </interactant>
    <organismsDiffer>false</organismsDiffer>
    <experiments>3</experiments>
</comment>
<comment type="interaction">
    <interactant intactId="EBI-10171697">
        <id>Q6A162</id>
    </interactant>
    <interactant intactId="EBI-10226570">
        <id>Q0P5Q0</id>
        <label>TMSB4X</label>
    </interactant>
    <organismsDiffer>false</organismsDiffer>
    <experiments>3</experiments>
</comment>
<comment type="interaction">
    <interactant intactId="EBI-10171697">
        <id>Q6A162</id>
    </interactant>
    <interactant intactId="EBI-2509913">
        <id>Q96KP6</id>
        <label>TNIP3</label>
    </interactant>
    <organismsDiffer>false</organismsDiffer>
    <experiments>4</experiments>
</comment>
<comment type="interaction">
    <interactant intactId="EBI-10171697">
        <id>Q6A162</id>
    </interactant>
    <interactant intactId="EBI-726527">
        <id>P13805</id>
        <label>TNNT1</label>
    </interactant>
    <organismsDiffer>false</organismsDiffer>
    <experiments>3</experiments>
</comment>
<comment type="interaction">
    <interactant intactId="EBI-10171697">
        <id>Q6A162</id>
    </interactant>
    <interactant intactId="EBI-3650647">
        <id>Q9BUZ4</id>
        <label>TRAF4</label>
    </interactant>
    <organismsDiffer>false</organismsDiffer>
    <experiments>7</experiments>
</comment>
<comment type="interaction">
    <interactant intactId="EBI-10171697">
        <id>Q6A162</id>
    </interactant>
    <interactant intactId="EBI-5235829">
        <id>Q8IWZ5</id>
        <label>TRIM42</label>
    </interactant>
    <organismsDiffer>false</organismsDiffer>
    <experiments>3</experiments>
</comment>
<comment type="interaction">
    <interactant intactId="EBI-10171697">
        <id>Q6A162</id>
    </interactant>
    <interactant intactId="EBI-2349743">
        <id>Q12815</id>
        <label>TROAP</label>
    </interactant>
    <organismsDiffer>false</organismsDiffer>
    <experiments>3</experiments>
</comment>
<comment type="interaction">
    <interactant intactId="EBI-10171697">
        <id>Q6A162</id>
    </interactant>
    <interactant intactId="EBI-10261521">
        <id>Q8IV54</id>
        <label>TSC22D4</label>
    </interactant>
    <organismsDiffer>false</organismsDiffer>
    <experiments>3</experiments>
</comment>
<comment type="interaction">
    <interactant intactId="EBI-10171697">
        <id>Q6A162</id>
    </interactant>
    <interactant intactId="EBI-10241197">
        <id>Q3SY00</id>
        <label>TSGA10IP</label>
    </interactant>
    <organismsDiffer>false</organismsDiffer>
    <experiments>3</experiments>
</comment>
<comment type="interaction">
    <interactant intactId="EBI-10171697">
        <id>Q6A162</id>
    </interactant>
    <interactant intactId="EBI-9053916">
        <id>Q63HK5</id>
        <label>TSHZ3</label>
    </interactant>
    <organismsDiffer>false</organismsDiffer>
    <experiments>3</experiments>
</comment>
<comment type="interaction">
    <interactant intactId="EBI-10171697">
        <id>Q6A162</id>
    </interactant>
    <interactant intactId="EBI-6447954">
        <id>Q5W5X9</id>
        <label>TTC23</label>
    </interactant>
    <organismsDiffer>false</organismsDiffer>
    <experiments>3</experiments>
</comment>
<comment type="interaction">
    <interactant intactId="EBI-10171697">
        <id>Q6A162</id>
    </interactant>
    <interactant intactId="EBI-2851213">
        <id>Q8N5M4</id>
        <label>TTC9C</label>
    </interactant>
    <organismsDiffer>false</organismsDiffer>
    <experiments>3</experiments>
</comment>
<comment type="interaction">
    <interactant intactId="EBI-10171697">
        <id>Q6A162</id>
    </interactant>
    <interactant intactId="EBI-7844656">
        <id>Q6ZVT0</id>
        <label>TTLL10</label>
    </interactant>
    <organismsDiffer>false</organismsDiffer>
    <experiments>3</experiments>
</comment>
<comment type="interaction">
    <interactant intactId="EBI-10171697">
        <id>Q6A162</id>
    </interactant>
    <interactant intactId="EBI-359793">
        <id>P40222</id>
        <label>TXLNA</label>
    </interactant>
    <organismsDiffer>false</organismsDiffer>
    <experiments>8</experiments>
</comment>
<comment type="interaction">
    <interactant intactId="EBI-10171697">
        <id>Q6A162</id>
    </interactant>
    <interactant intactId="EBI-2932492">
        <id>Q99757</id>
        <label>TXN2</label>
    </interactant>
    <organismsDiffer>false</organismsDiffer>
    <experiments>3</experiments>
</comment>
<comment type="interaction">
    <interactant intactId="EBI-10171697">
        <id>Q6A162</id>
    </interactant>
    <interactant intactId="EBI-2825190">
        <id>Q86UY0</id>
        <label>TXNDC5</label>
    </interactant>
    <organismsDiffer>false</organismsDiffer>
    <experiments>3</experiments>
</comment>
<comment type="interaction">
    <interactant intactId="EBI-10171697">
        <id>Q6A162</id>
    </interactant>
    <interactant intactId="EBI-1383454">
        <id>P29597</id>
        <label>TYK2</label>
    </interactant>
    <organismsDiffer>false</organismsDiffer>
    <experiments>3</experiments>
</comment>
<comment type="interaction">
    <interactant intactId="EBI-10171697">
        <id>Q6A162</id>
    </interactant>
    <interactant intactId="EBI-3951628">
        <id>Q06418</id>
        <label>TYRO3</label>
    </interactant>
    <organismsDiffer>false</organismsDiffer>
    <experiments>3</experiments>
</comment>
<comment type="interaction">
    <interactant intactId="EBI-10171697">
        <id>Q6A162</id>
    </interactant>
    <interactant intactId="EBI-350510">
        <id>Q9BZF9</id>
        <label>UACA</label>
    </interactant>
    <organismsDiffer>false</organismsDiffer>
    <experiments>3</experiments>
</comment>
<comment type="interaction">
    <interactant intactId="EBI-10171697">
        <id>Q6A162</id>
    </interactant>
    <interactant intactId="EBI-2105393">
        <id>P57075</id>
        <label>UBASH3A</label>
    </interactant>
    <organismsDiffer>false</organismsDiffer>
    <experiments>3</experiments>
</comment>
<comment type="interaction">
    <interactant intactId="EBI-10171697">
        <id>Q6A162</id>
    </interactant>
    <interactant intactId="EBI-739895">
        <id>Q8N6Y0</id>
        <label>USHBP1</label>
    </interactant>
    <organismsDiffer>false</organismsDiffer>
    <experiments>3</experiments>
</comment>
<comment type="interaction">
    <interactant intactId="EBI-10171697">
        <id>Q6A162</id>
    </interactant>
    <interactant intactId="EBI-743272">
        <id>O75604</id>
        <label>USP2</label>
    </interactant>
    <organismsDiffer>false</organismsDiffer>
    <experiments>6</experiments>
</comment>
<comment type="interaction">
    <interactant intactId="EBI-10171697">
        <id>Q6A162</id>
    </interactant>
    <interactant intactId="EBI-373242">
        <id>Q9UK80</id>
        <label>USP21</label>
    </interactant>
    <organismsDiffer>false</organismsDiffer>
    <experiments>3</experiments>
</comment>
<comment type="interaction">
    <interactant intactId="EBI-10171697">
        <id>Q6A162</id>
    </interactant>
    <interactant intactId="EBI-10225961">
        <id>Q08E77</id>
        <label>UTP14C</label>
    </interactant>
    <organismsDiffer>false</organismsDiffer>
    <experiments>3</experiments>
</comment>
<comment type="interaction">
    <interactant intactId="EBI-10171697">
        <id>Q6A162</id>
    </interactant>
    <interactant intactId="EBI-5457544">
        <id>Q9BRU9</id>
        <label>UTP23</label>
    </interactant>
    <organismsDiffer>false</organismsDiffer>
    <experiments>3</experiments>
</comment>
<comment type="interaction">
    <interactant intactId="EBI-10171697">
        <id>Q6A162</id>
    </interactant>
    <interactant intactId="EBI-357355">
        <id>Q9UBK9</id>
        <label>UXT</label>
    </interactant>
    <organismsDiffer>false</organismsDiffer>
    <experiments>3</experiments>
</comment>
<comment type="interaction">
    <interactant intactId="EBI-10171697">
        <id>Q6A162</id>
    </interactant>
    <interactant intactId="EBI-11980193">
        <id>Q14119</id>
        <label>VEZF1</label>
    </interactant>
    <organismsDiffer>false</organismsDiffer>
    <experiments>3</experiments>
</comment>
<comment type="interaction">
    <interactant intactId="EBI-10171697">
        <id>Q6A162</id>
    </interactant>
    <interactant intactId="EBI-744560">
        <id>Q64LD2</id>
        <label>WDR25</label>
    </interactant>
    <organismsDiffer>false</organismsDiffer>
    <experiments>3</experiments>
</comment>
<comment type="interaction">
    <interactant intactId="EBI-10171697">
        <id>Q6A162</id>
    </interactant>
    <interactant intactId="EBI-2320534">
        <id>P19544</id>
        <label>WT1</label>
    </interactant>
    <organismsDiffer>false</organismsDiffer>
    <experiments>4</experiments>
</comment>
<comment type="interaction">
    <interactant intactId="EBI-10171697">
        <id>Q6A162</id>
    </interactant>
    <interactant intactId="EBI-10223946">
        <id>Q06250</id>
        <label>WT1-AS</label>
    </interactant>
    <organismsDiffer>false</organismsDiffer>
    <experiments>3</experiments>
</comment>
<comment type="interaction">
    <interactant intactId="EBI-10171697">
        <id>Q6A162</id>
    </interactant>
    <interactant intactId="EBI-711925">
        <id>Q05516</id>
        <label>ZBTB16</label>
    </interactant>
    <organismsDiffer>false</organismsDiffer>
    <experiments>9</experiments>
</comment>
<comment type="interaction">
    <interactant intactId="EBI-10171697">
        <id>Q6A162</id>
    </interactant>
    <interactant intactId="EBI-744471">
        <id>O43167</id>
        <label>ZBTB24</label>
    </interactant>
    <organismsDiffer>false</organismsDiffer>
    <experiments>3</experiments>
</comment>
<comment type="interaction">
    <interactant intactId="EBI-10171697">
        <id>Q6A162</id>
    </interactant>
    <interactant intactId="EBI-12287587">
        <id>B2RXF5</id>
        <label>ZBTB42</label>
    </interactant>
    <organismsDiffer>false</organismsDiffer>
    <experiments>3</experiments>
</comment>
<comment type="interaction">
    <interactant intactId="EBI-10171697">
        <id>Q6A162</id>
    </interactant>
    <interactant intactId="EBI-740767">
        <id>Q53FD0</id>
        <label>ZC2HC1C</label>
    </interactant>
    <organismsDiffer>false</organismsDiffer>
    <experiments>3</experiments>
</comment>
<comment type="interaction">
    <interactant intactId="EBI-10171697">
        <id>Q6A162</id>
    </interactant>
    <interactant intactId="EBI-750052">
        <id>Q9Y260</id>
        <label>ZFAB</label>
    </interactant>
    <organismsDiffer>false</organismsDiffer>
    <experiments>3</experiments>
</comment>
<comment type="interaction">
    <interactant intactId="EBI-10171697">
        <id>Q6A162</id>
    </interactant>
    <interactant intactId="EBI-10237226">
        <id>Q15911-2</id>
        <label>ZFHX3</label>
    </interactant>
    <organismsDiffer>false</organismsDiffer>
    <experiments>3</experiments>
</comment>
<comment type="interaction">
    <interactant intactId="EBI-10171697">
        <id>Q6A162</id>
    </interactant>
    <interactant intactId="EBI-2555749">
        <id>Q6P2D0</id>
        <label>ZFP1</label>
    </interactant>
    <organismsDiffer>false</organismsDiffer>
    <experiments>3</experiments>
</comment>
<comment type="interaction">
    <interactant intactId="EBI-10171697">
        <id>Q6A162</id>
    </interactant>
    <interactant intactId="EBI-7236323">
        <id>Q6ZN57</id>
        <label>ZFP2</label>
    </interactant>
    <organismsDiffer>false</organismsDiffer>
    <experiments>6</experiments>
</comment>
<comment type="interaction">
    <interactant intactId="EBI-10171697">
        <id>Q6A162</id>
    </interactant>
    <interactant intactId="EBI-10322364">
        <id>Q9UJL9</id>
        <label>ZFP69B</label>
    </interactant>
    <organismsDiffer>false</organismsDiffer>
    <experiments>3</experiments>
</comment>
<comment type="interaction">
    <interactant intactId="EBI-10171697">
        <id>Q6A162</id>
    </interactant>
    <interactant intactId="EBI-2849569">
        <id>Q9BQ24</id>
        <label>ZFYVE21</label>
    </interactant>
    <organismsDiffer>false</organismsDiffer>
    <experiments>3</experiments>
</comment>
<comment type="interaction">
    <interactant intactId="EBI-10171697">
        <id>Q6A162</id>
    </interactant>
    <interactant intactId="EBI-8656416">
        <id>Q68DK2-5</id>
        <label>ZFYVE26</label>
    </interactant>
    <organismsDiffer>false</organismsDiffer>
    <experiments>6</experiments>
</comment>
<comment type="interaction">
    <interactant intactId="EBI-10171697">
        <id>Q6A162</id>
    </interactant>
    <interactant intactId="EBI-3439227">
        <id>Q8N5A5</id>
        <label>ZGPAT</label>
    </interactant>
    <organismsDiffer>false</organismsDiffer>
    <experiments>3</experiments>
</comment>
<comment type="interaction">
    <interactant intactId="EBI-10171697">
        <id>Q6A162</id>
    </interactant>
    <interactant intactId="EBI-10183064">
        <id>Q8N5A5-2</id>
        <label>ZGPAT</label>
    </interactant>
    <organismsDiffer>false</organismsDiffer>
    <experiments>6</experiments>
</comment>
<comment type="interaction">
    <interactant intactId="EBI-10171697">
        <id>Q6A162</id>
    </interactant>
    <interactant intactId="EBI-2682299">
        <id>Q96NC0</id>
        <label>ZMAT2</label>
    </interactant>
    <organismsDiffer>false</organismsDiffer>
    <experiments>3</experiments>
</comment>
<comment type="interaction">
    <interactant intactId="EBI-10171697">
        <id>Q6A162</id>
    </interactant>
    <interactant intactId="EBI-5278328">
        <id>Q8IZC7</id>
        <label>ZNF101</label>
    </interactant>
    <organismsDiffer>false</organismsDiffer>
    <experiments>3</experiments>
</comment>
<comment type="interaction">
    <interactant intactId="EBI-10171697">
        <id>Q6A162</id>
    </interactant>
    <interactant intactId="EBI-2555767">
        <id>Q15973</id>
        <label>ZNF124</label>
    </interactant>
    <organismsDiffer>false</organismsDiffer>
    <experiments>3</experiments>
</comment>
<comment type="interaction">
    <interactant intactId="EBI-10171697">
        <id>Q6A162</id>
    </interactant>
    <interactant intactId="EBI-10213071">
        <id>P52744-2</id>
        <label>ZNF138</label>
    </interactant>
    <organismsDiffer>false</organismsDiffer>
    <experiments>3</experiments>
</comment>
<comment type="interaction">
    <interactant intactId="EBI-10171697">
        <id>Q6A162</id>
    </interactant>
    <interactant intactId="EBI-10186058">
        <id>Q53Z40</id>
        <label>ZNF165</label>
    </interactant>
    <organismsDiffer>false</organismsDiffer>
    <experiments>3</experiments>
</comment>
<comment type="interaction">
    <interactant intactId="EBI-10171697">
        <id>Q6A162</id>
    </interactant>
    <interactant intactId="EBI-1105334">
        <id>P17021</id>
        <label>ZNF17</label>
    </interactant>
    <organismsDiffer>false</organismsDiffer>
    <experiments>3</experiments>
</comment>
<comment type="interaction">
    <interactant intactId="EBI-10171697">
        <id>Q6A162</id>
    </interactant>
    <interactant intactId="EBI-717634">
        <id>P17024</id>
        <label>ZNF20</label>
    </interactant>
    <organismsDiffer>false</organismsDiffer>
    <experiments>3</experiments>
</comment>
<comment type="interaction">
    <interactant intactId="EBI-10171697">
        <id>Q6A162</id>
    </interactant>
    <interactant intactId="EBI-751960">
        <id>O95125</id>
        <label>ZNF202</label>
    </interactant>
    <organismsDiffer>false</organismsDiffer>
    <experiments>6</experiments>
</comment>
<comment type="interaction">
    <interactant intactId="EBI-10171697">
        <id>Q6A162</id>
    </interactant>
    <interactant intactId="EBI-1105361">
        <id>Q9UIE0</id>
        <label>ZNF230</label>
    </interactant>
    <organismsDiffer>false</organismsDiffer>
    <experiments>3</experiments>
</comment>
<comment type="interaction">
    <interactant intactId="EBI-10171697">
        <id>Q6A162</id>
    </interactant>
    <interactant intactId="EBI-10177272">
        <id>P15622-3</id>
        <label>ZNF250</label>
    </interactant>
    <organismsDiffer>false</organismsDiffer>
    <experiments>6</experiments>
</comment>
<comment type="interaction">
    <interactant intactId="EBI-10171697">
        <id>Q6A162</id>
    </interactant>
    <interactant intactId="EBI-2841331">
        <id>P17031</id>
        <label>ZNF26</label>
    </interactant>
    <organismsDiffer>false</organismsDiffer>
    <experiments>3</experiments>
</comment>
<comment type="interaction">
    <interactant intactId="EBI-10171697">
        <id>Q6A162</id>
    </interactant>
    <interactant intactId="EBI-7115319">
        <id>Q14584</id>
        <label>ZNF266</label>
    </interactant>
    <organismsDiffer>false</organismsDiffer>
    <experiments>5</experiments>
</comment>
<comment type="interaction">
    <interactant intactId="EBI-10171697">
        <id>Q6A162</id>
    </interactant>
    <interactant intactId="EBI-10310244">
        <id>Q9HBT8-2</id>
        <label>ZNF286A</label>
    </interactant>
    <organismsDiffer>false</organismsDiffer>
    <experiments>3</experiments>
</comment>
<comment type="interaction">
    <interactant intactId="EBI-10171697">
        <id>Q6A162</id>
    </interactant>
    <interactant intactId="EBI-10292528">
        <id>Q96PQ6-4</id>
        <label>ZNF317</label>
    </interactant>
    <organismsDiffer>false</organismsDiffer>
    <experiments>3</experiments>
</comment>
<comment type="interaction">
    <interactant intactId="EBI-10171697">
        <id>Q6A162</id>
    </interactant>
    <interactant intactId="EBI-11993110">
        <id>Q9P2F9</id>
        <label>ZNF319</label>
    </interactant>
    <organismsDiffer>false</organismsDiffer>
    <experiments>3</experiments>
</comment>
<comment type="interaction">
    <interactant intactId="EBI-10171697">
        <id>Q6A162</id>
    </interactant>
    <interactant intactId="EBI-7233259">
        <id>Q86UD4</id>
        <label>ZNF329</label>
    </interactant>
    <organismsDiffer>false</organismsDiffer>
    <experiments>3</experiments>
</comment>
<comment type="interaction">
    <interactant intactId="EBI-10171697">
        <id>Q6A162</id>
    </interactant>
    <interactant intactId="EBI-714987">
        <id>Q9Y3M9</id>
        <label>ZNF337</label>
    </interactant>
    <organismsDiffer>false</organismsDiffer>
    <experiments>3</experiments>
</comment>
<comment type="interaction">
    <interactant intactId="EBI-10171697">
        <id>Q6A162</id>
    </interactant>
    <interactant intactId="EBI-347633">
        <id>Q9H9D4</id>
        <label>ZNF408</label>
    </interactant>
    <organismsDiffer>false</organismsDiffer>
    <experiments>3</experiments>
</comment>
<comment type="interaction">
    <interactant intactId="EBI-10171697">
        <id>Q6A162</id>
    </interactant>
    <interactant intactId="EBI-11741890">
        <id>Q86VK4-3</id>
        <label>ZNF410</label>
    </interactant>
    <organismsDiffer>false</organismsDiffer>
    <experiments>3</experiments>
</comment>
<comment type="interaction">
    <interactant intactId="EBI-10171697">
        <id>Q6A162</id>
    </interactant>
    <interactant intactId="EBI-740727">
        <id>Q8TAU3</id>
        <label>ZNF417</label>
    </interactant>
    <organismsDiffer>false</organismsDiffer>
    <experiments>6</experiments>
</comment>
<comment type="interaction">
    <interactant intactId="EBI-10171697">
        <id>Q6A162</id>
    </interactant>
    <interactant intactId="EBI-11962468">
        <id>Q7Z4V0</id>
        <label>ZNF438</label>
    </interactant>
    <organismsDiffer>false</organismsDiffer>
    <experiments>3</experiments>
</comment>
<comment type="interaction">
    <interactant intactId="EBI-10171697">
        <id>Q6A162</id>
    </interactant>
    <interactant intactId="EBI-747580">
        <id>Q8NDP4</id>
        <label>ZNF439</label>
    </interactant>
    <organismsDiffer>false</organismsDiffer>
    <experiments>6</experiments>
</comment>
<comment type="interaction">
    <interactant intactId="EBI-10171697">
        <id>Q6A162</id>
    </interactant>
    <interactant intactId="EBI-740232">
        <id>Q9NWS9-2</id>
        <label>ZNF446</label>
    </interactant>
    <organismsDiffer>false</organismsDiffer>
    <experiments>6</experiments>
</comment>
<comment type="interaction">
    <interactant intactId="EBI-10171697">
        <id>Q6A162</id>
    </interactant>
    <interactant intactId="EBI-948288">
        <id>Q96MN9</id>
        <label>ZNF488</label>
    </interactant>
    <organismsDiffer>false</organismsDiffer>
    <experiments>3</experiments>
</comment>
<comment type="interaction">
    <interactant intactId="EBI-10171697">
        <id>Q6A162</id>
    </interactant>
    <interactant intactId="EBI-10273713">
        <id>Q8TBZ8</id>
        <label>ZNF564</label>
    </interactant>
    <organismsDiffer>false</organismsDiffer>
    <experiments>3</experiments>
</comment>
<comment type="interaction">
    <interactant intactId="EBI-10171697">
        <id>Q6A162</id>
    </interactant>
    <interactant intactId="EBI-4395687">
        <id>Q5MCW4</id>
        <label>ZNF569</label>
    </interactant>
    <organismsDiffer>false</organismsDiffer>
    <experiments>3</experiments>
</comment>
<comment type="interaction">
    <interactant intactId="EBI-10171697">
        <id>Q6A162</id>
    </interactant>
    <interactant intactId="EBI-14069183">
        <id>Q86XF7</id>
        <label>ZNF575</label>
    </interactant>
    <organismsDiffer>false</organismsDiffer>
    <experiments>3</experiments>
</comment>
<comment type="interaction">
    <interactant intactId="EBI-10171697">
        <id>Q6A162</id>
    </interactant>
    <interactant intactId="EBI-746277">
        <id>Q9UK33</id>
        <label>ZNF580</label>
    </interactant>
    <organismsDiffer>false</organismsDiffer>
    <experiments>3</experiments>
</comment>
<comment type="interaction">
    <interactant intactId="EBI-10171697">
        <id>Q6A162</id>
    </interactant>
    <interactant intactId="EBI-745520">
        <id>Q9P0T4</id>
        <label>ZNF581</label>
    </interactant>
    <organismsDiffer>false</organismsDiffer>
    <experiments>6</experiments>
</comment>
<comment type="interaction">
    <interactant intactId="EBI-10171697">
        <id>Q6A162</id>
    </interactant>
    <interactant intactId="EBI-6427977">
        <id>Q96SQ5</id>
        <label>ZNF587</label>
    </interactant>
    <organismsDiffer>false</organismsDiffer>
    <experiments>6</experiments>
</comment>
<comment type="interaction">
    <interactant intactId="EBI-10171697">
        <id>Q6A162</id>
    </interactant>
    <interactant intactId="EBI-4395587">
        <id>Q96I27</id>
        <label>ZNF625</label>
    </interactant>
    <organismsDiffer>false</organismsDiffer>
    <experiments>3</experiments>
</comment>
<comment type="interaction">
    <interactant intactId="EBI-10171697">
        <id>Q6A162</id>
    </interactant>
    <interactant intactId="EBI-625509">
        <id>Q8N720</id>
        <label>ZNF655</label>
    </interactant>
    <organismsDiffer>false</organismsDiffer>
    <experiments>3</experiments>
</comment>
<comment type="interaction">
    <interactant intactId="EBI-10171697">
        <id>Q6A162</id>
    </interactant>
    <interactant intactId="EBI-16429014">
        <id>A0A0S2Z5X4</id>
        <label>ZNF688</label>
    </interactant>
    <organismsDiffer>false</organismsDiffer>
    <experiments>3</experiments>
</comment>
<comment type="interaction">
    <interactant intactId="EBI-10171697">
        <id>Q6A162</id>
    </interactant>
    <interactant intactId="EBI-10265733">
        <id>Q8N508</id>
        <label>ZNF697</label>
    </interactant>
    <organismsDiffer>false</organismsDiffer>
    <experiments>3</experiments>
</comment>
<comment type="interaction">
    <interactant intactId="EBI-10171697">
        <id>Q6A162</id>
    </interactant>
    <interactant intactId="EBI-10309738">
        <id>Q9H963</id>
        <label>ZNF702P</label>
    </interactant>
    <organismsDiffer>false</organismsDiffer>
    <experiments>3</experiments>
</comment>
<comment type="interaction">
    <interactant intactId="EBI-10171697">
        <id>Q6A162</id>
    </interactant>
    <interactant intactId="EBI-7254550">
        <id>P36508</id>
        <label>ZNF76</label>
    </interactant>
    <organismsDiffer>false</organismsDiffer>
    <experiments>3</experiments>
</comment>
<comment type="interaction">
    <interactant intactId="EBI-10171697">
        <id>Q6A162</id>
    </interactant>
    <interactant intactId="EBI-10240849">
        <id>Q3KQV3</id>
        <label>ZNF792</label>
    </interactant>
    <organismsDiffer>false</organismsDiffer>
    <experiments>3</experiments>
</comment>
<comment type="interaction">
    <interactant intactId="EBI-10171697">
        <id>Q6A162</id>
    </interactant>
    <interactant intactId="EBI-10225757">
        <id>Q08AG5</id>
        <label>ZNF844</label>
    </interactant>
    <organismsDiffer>false</organismsDiffer>
    <experiments>6</experiments>
</comment>
<comment type="interaction">
    <interactant intactId="EBI-10171697">
        <id>Q6A162</id>
    </interactant>
    <interactant intactId="EBI-10281938">
        <id>Q9Y5A6</id>
        <label>ZSCAN21</label>
    </interactant>
    <organismsDiffer>false</organismsDiffer>
    <experiments>3</experiments>
</comment>
<comment type="interaction">
    <interactant intactId="EBI-10171697">
        <id>Q6A162</id>
    </interactant>
    <interactant intactId="EBI-10242473">
        <id>Q53FW8</id>
    </interactant>
    <organismsDiffer>false</organismsDiffer>
    <experiments>3</experiments>
</comment>
<comment type="interaction">
    <interactant intactId="EBI-10171697">
        <id>Q6A162</id>
    </interactant>
    <interactant intactId="EBI-10243533">
        <id>Q5BKY6</id>
    </interactant>
    <organismsDiffer>false</organismsDiffer>
    <experiments>3</experiments>
</comment>
<comment type="interaction">
    <interactant intactId="EBI-10171697">
        <id>Q6A162</id>
    </interactant>
    <interactant intactId="EBI-10248148">
        <id>Q5W150</id>
    </interactant>
    <organismsDiffer>false</organismsDiffer>
    <experiments>3</experiments>
</comment>
<comment type="interaction">
    <interactant intactId="EBI-10171697">
        <id>Q6A162</id>
    </interactant>
    <interactant intactId="EBI-10268244">
        <id>Q8N9J2</id>
    </interactant>
    <organismsDiffer>false</organismsDiffer>
    <experiments>3</experiments>
</comment>
<comment type="interaction">
    <interactant intactId="EBI-10171697">
        <id>Q6A162</id>
    </interactant>
    <interactant intactId="EBI-10286297">
        <id>Q96GB0</id>
    </interactant>
    <organismsDiffer>false</organismsDiffer>
    <experiments>3</experiments>
</comment>
<comment type="interaction">
    <interactant intactId="EBI-10171697">
        <id>Q6A162</id>
    </interactant>
    <interactant intactId="EBI-10307481">
        <id>Q9H6F0</id>
    </interactant>
    <organismsDiffer>false</organismsDiffer>
    <experiments>3</experiments>
</comment>
<comment type="interaction">
    <interactant intactId="EBI-10171697">
        <id>Q6A162</id>
    </interactant>
    <interactant intactId="EBI-10315054">
        <id>Q9NWL9</id>
    </interactant>
    <organismsDiffer>false</organismsDiffer>
    <experiments>3</experiments>
</comment>
<comment type="tissue specificity">
    <text evidence="2 3">Expressed in skin and scalp. Also very weakly expressed in tongue, breast, colon and small intestine. In the hair follicle, it is specifically present in the upper hair cuticle. Not present in the upper cortex (at protein level).</text>
</comment>
<comment type="developmental stage">
    <text evidence="3">During differentiation of the hair, it is one of the last keratins expressed.</text>
</comment>
<comment type="miscellaneous">
    <text>There are two types of cytoskeletal and microfibrillar keratin, I (acidic) and II (neutral to basic) (40-55 and 56-70 kDa, respectively).</text>
</comment>
<comment type="similarity">
    <text evidence="1">Belongs to the intermediate filament family.</text>
</comment>
<dbReference type="EMBL" id="AJ786658">
    <property type="protein sequence ID" value="CAH10353.1"/>
    <property type="molecule type" value="mRNA"/>
</dbReference>
<dbReference type="EMBL" id="BC130396">
    <property type="protein sequence ID" value="AAI30397.1"/>
    <property type="molecule type" value="mRNA"/>
</dbReference>
<dbReference type="EMBL" id="BC150174">
    <property type="protein sequence ID" value="AAI50175.1"/>
    <property type="molecule type" value="mRNA"/>
</dbReference>
<dbReference type="EMBL" id="BC150191">
    <property type="protein sequence ID" value="AAI50192.1"/>
    <property type="molecule type" value="mRNA"/>
</dbReference>
<dbReference type="EMBL" id="BK004055">
    <property type="protein sequence ID" value="DAA04488.1"/>
    <property type="molecule type" value="mRNA"/>
</dbReference>
<dbReference type="CCDS" id="CCDS42320.1"/>
<dbReference type="RefSeq" id="NP_001372146.1">
    <property type="nucleotide sequence ID" value="NM_001385217.1"/>
</dbReference>
<dbReference type="RefSeq" id="NP_001376173.1">
    <property type="nucleotide sequence ID" value="NM_001389244.1"/>
</dbReference>
<dbReference type="RefSeq" id="NP_872303.2">
    <property type="nucleotide sequence ID" value="NM_182497.4"/>
</dbReference>
<dbReference type="SMR" id="Q6A162"/>
<dbReference type="BioGRID" id="125917">
    <property type="interactions" value="437"/>
</dbReference>
<dbReference type="FunCoup" id="Q6A162">
    <property type="interactions" value="185"/>
</dbReference>
<dbReference type="IntAct" id="Q6A162">
    <property type="interactions" value="414"/>
</dbReference>
<dbReference type="STRING" id="9606.ENSP00000366984"/>
<dbReference type="GlyGen" id="Q6A162">
    <property type="glycosylation" value="1 site, 1 O-linked glycan (1 site)"/>
</dbReference>
<dbReference type="iPTMnet" id="Q6A162"/>
<dbReference type="SwissPalm" id="Q6A162"/>
<dbReference type="BioMuta" id="KRT40"/>
<dbReference type="DMDM" id="166218814"/>
<dbReference type="CPTAC" id="CPTAC-1314"/>
<dbReference type="jPOST" id="Q6A162"/>
<dbReference type="MassIVE" id="Q6A162"/>
<dbReference type="PaxDb" id="9606-ENSP00000366984"/>
<dbReference type="PeptideAtlas" id="Q6A162"/>
<dbReference type="ProteomicsDB" id="66176"/>
<dbReference type="Antibodypedia" id="28766">
    <property type="antibodies" value="67 antibodies from 18 providers"/>
</dbReference>
<dbReference type="DNASU" id="125115"/>
<dbReference type="Ensembl" id="ENST00000377755.9">
    <property type="protein sequence ID" value="ENSP00000366984.4"/>
    <property type="gene ID" value="ENSG00000204889.11"/>
</dbReference>
<dbReference type="Ensembl" id="ENST00000398486.2">
    <property type="protein sequence ID" value="ENSP00000381500.2"/>
    <property type="gene ID" value="ENSG00000204889.11"/>
</dbReference>
<dbReference type="Ensembl" id="ENST00000576967.6">
    <property type="protein sequence ID" value="ENSP00000459621.2"/>
    <property type="gene ID" value="ENSG00000262845.7"/>
</dbReference>
<dbReference type="Ensembl" id="ENST00000610983.1">
    <property type="protein sequence ID" value="ENSP00000479080.1"/>
    <property type="gene ID" value="ENSG00000262845.7"/>
</dbReference>
<dbReference type="Ensembl" id="ENST00000684280.1">
    <property type="protein sequence ID" value="ENSP00000506768.1"/>
    <property type="gene ID" value="ENSG00000204889.11"/>
</dbReference>
<dbReference type="GeneID" id="125115"/>
<dbReference type="KEGG" id="hsa:125115"/>
<dbReference type="MANE-Select" id="ENST00000377755.9">
    <property type="protein sequence ID" value="ENSP00000366984.4"/>
    <property type="RefSeq nucleotide sequence ID" value="NM_001389244.1"/>
    <property type="RefSeq protein sequence ID" value="NP_001376173.1"/>
</dbReference>
<dbReference type="UCSC" id="uc010cxh.2">
    <property type="organism name" value="human"/>
</dbReference>
<dbReference type="AGR" id="HGNC:26707"/>
<dbReference type="CTD" id="125115"/>
<dbReference type="DisGeNET" id="125115"/>
<dbReference type="GeneCards" id="KRT40"/>
<dbReference type="HGNC" id="HGNC:26707">
    <property type="gene designation" value="KRT40"/>
</dbReference>
<dbReference type="HPA" id="ENSG00000204889">
    <property type="expression patterns" value="Group enriched (pituitary gland, retina, skin)"/>
</dbReference>
<dbReference type="MIM" id="616679">
    <property type="type" value="gene"/>
</dbReference>
<dbReference type="neXtProt" id="NX_Q6A162"/>
<dbReference type="OpenTargets" id="ENSG00000204889"/>
<dbReference type="PharmGKB" id="PA147357651"/>
<dbReference type="VEuPathDB" id="HostDB:ENSG00000204889"/>
<dbReference type="eggNOG" id="ENOG502SHG0">
    <property type="taxonomic scope" value="Eukaryota"/>
</dbReference>
<dbReference type="GeneTree" id="ENSGT00940000161968"/>
<dbReference type="HOGENOM" id="CLU_012560_8_0_1"/>
<dbReference type="InParanoid" id="Q6A162"/>
<dbReference type="OMA" id="PCSPESC"/>
<dbReference type="OrthoDB" id="2441647at2759"/>
<dbReference type="PAN-GO" id="Q6A162">
    <property type="GO annotations" value="3 GO annotations based on evolutionary models"/>
</dbReference>
<dbReference type="PhylomeDB" id="Q6A162"/>
<dbReference type="TreeFam" id="TF332742"/>
<dbReference type="PathwayCommons" id="Q6A162"/>
<dbReference type="Reactome" id="R-HSA-6805567">
    <property type="pathway name" value="Keratinization"/>
</dbReference>
<dbReference type="Reactome" id="R-HSA-6809371">
    <property type="pathway name" value="Formation of the cornified envelope"/>
</dbReference>
<dbReference type="SignaLink" id="Q6A162"/>
<dbReference type="BioGRID-ORCS" id="125115">
    <property type="hits" value="10 hits in 1136 CRISPR screens"/>
</dbReference>
<dbReference type="GenomeRNAi" id="125115"/>
<dbReference type="Pharos" id="Q6A162">
    <property type="development level" value="Tbio"/>
</dbReference>
<dbReference type="PRO" id="PR:Q6A162"/>
<dbReference type="Proteomes" id="UP000005640">
    <property type="component" value="Chromosome 17"/>
</dbReference>
<dbReference type="RNAct" id="Q6A162">
    <property type="molecule type" value="protein"/>
</dbReference>
<dbReference type="Bgee" id="ENSG00000204889">
    <property type="expression patterns" value="Expressed in male germ line stem cell (sensu Vertebrata) in testis and 25 other cell types or tissues"/>
</dbReference>
<dbReference type="ExpressionAtlas" id="Q6A162">
    <property type="expression patterns" value="baseline and differential"/>
</dbReference>
<dbReference type="GO" id="GO:0005856">
    <property type="term" value="C:cytoskeleton"/>
    <property type="evidence" value="ECO:0000318"/>
    <property type="project" value="GO_Central"/>
</dbReference>
<dbReference type="GO" id="GO:0005829">
    <property type="term" value="C:cytosol"/>
    <property type="evidence" value="ECO:0000304"/>
    <property type="project" value="Reactome"/>
</dbReference>
<dbReference type="GO" id="GO:0005882">
    <property type="term" value="C:intermediate filament"/>
    <property type="evidence" value="ECO:0007669"/>
    <property type="project" value="UniProtKB-KW"/>
</dbReference>
<dbReference type="GO" id="GO:0005198">
    <property type="term" value="F:structural molecule activity"/>
    <property type="evidence" value="ECO:0007669"/>
    <property type="project" value="InterPro"/>
</dbReference>
<dbReference type="GO" id="GO:0030855">
    <property type="term" value="P:epithelial cell differentiation"/>
    <property type="evidence" value="ECO:0000318"/>
    <property type="project" value="GO_Central"/>
</dbReference>
<dbReference type="GO" id="GO:0045109">
    <property type="term" value="P:intermediate filament organization"/>
    <property type="evidence" value="ECO:0000318"/>
    <property type="project" value="GO_Central"/>
</dbReference>
<dbReference type="FunFam" id="1.20.5.1160:FF:000002">
    <property type="entry name" value="Type I keratin 10"/>
    <property type="match status" value="1"/>
</dbReference>
<dbReference type="FunFam" id="1.20.5.170:FF:000002">
    <property type="entry name" value="Type I keratin KA11"/>
    <property type="match status" value="1"/>
</dbReference>
<dbReference type="Gene3D" id="1.20.5.170">
    <property type="match status" value="1"/>
</dbReference>
<dbReference type="Gene3D" id="1.20.5.500">
    <property type="entry name" value="Single helix bin"/>
    <property type="match status" value="1"/>
</dbReference>
<dbReference type="Gene3D" id="1.20.5.1160">
    <property type="entry name" value="Vasodilator-stimulated phosphoprotein"/>
    <property type="match status" value="1"/>
</dbReference>
<dbReference type="InterPro" id="IPR039008">
    <property type="entry name" value="IF_rod_dom"/>
</dbReference>
<dbReference type="InterPro" id="IPR002957">
    <property type="entry name" value="Keratin_I"/>
</dbReference>
<dbReference type="PANTHER" id="PTHR23239">
    <property type="entry name" value="INTERMEDIATE FILAMENT"/>
    <property type="match status" value="1"/>
</dbReference>
<dbReference type="PANTHER" id="PTHR23239:SF90">
    <property type="entry name" value="KERATIN, TYPE I CYTOSKELETAL 40"/>
    <property type="match status" value="1"/>
</dbReference>
<dbReference type="Pfam" id="PF00038">
    <property type="entry name" value="Filament"/>
    <property type="match status" value="1"/>
</dbReference>
<dbReference type="PRINTS" id="PR01248">
    <property type="entry name" value="TYPE1KERATIN"/>
</dbReference>
<dbReference type="SMART" id="SM01391">
    <property type="entry name" value="Filament"/>
    <property type="match status" value="1"/>
</dbReference>
<dbReference type="SUPFAM" id="SSF64593">
    <property type="entry name" value="Intermediate filament protein, coiled coil region"/>
    <property type="match status" value="2"/>
</dbReference>
<dbReference type="PROSITE" id="PS51842">
    <property type="entry name" value="IF_ROD_2"/>
    <property type="match status" value="1"/>
</dbReference>
<gene>
    <name type="primary">KRT40</name>
    <name type="synonym">KA36</name>
</gene>